<reference key="1">
    <citation type="journal article" date="1986" name="Proc. Natl. Acad. Sci. U.S.A.">
        <title>Analysis of the structure, transcripts, and protein products of bcl-2, the gene involved in human follicular lymphoma.</title>
        <authorList>
            <person name="Tsujimoto Y."/>
            <person name="Croce C.M."/>
        </authorList>
    </citation>
    <scope>NUCLEOTIDE SEQUENCE [MRNA] (ISOFORMS ALPHA AND BETA)</scope>
</reference>
<reference key="2">
    <citation type="journal article" date="1992" name="Nucleic Acids Res.">
        <title>Isolation and characterization of the chicken bcl-2 gene: expression in a variety of tissues including lymphoid and neuronal organs in adult and embryo.</title>
        <authorList>
            <person name="Eguchi Y."/>
            <person name="Ewert D.L."/>
            <person name="Tsujimoto Y."/>
        </authorList>
    </citation>
    <scope>SEQUENCE REVISION TO 96; 110 AND 237</scope>
    <scope>FUNCTION</scope>
</reference>
<reference key="3">
    <citation type="journal article" date="1986" name="Cell">
        <title>Cloning and structural analysis of cDNAs for bcl-2 and a hybrid bcl-2/immunoglobulin transcript resulting from the t(14;18) translocation.</title>
        <authorList>
            <person name="Cleary M.L."/>
            <person name="Smith S.D."/>
            <person name="Sklar J."/>
        </authorList>
    </citation>
    <scope>NUCLEOTIDE SEQUENCE [MRNA] (ISOFORM ALPHA)</scope>
    <scope>CHROMOSOMAL TRANSLOCATION</scope>
</reference>
<reference key="4">
    <citation type="journal article" date="1988" name="EMBO J.">
        <title>Alternative promoters and exons, somatic mutation and deregulation of the Bcl-2-Ig fusion gene in lymphoma.</title>
        <authorList>
            <person name="Seto M."/>
            <person name="Jaeger U."/>
            <person name="Hockett R.D."/>
            <person name="Graninger W."/>
            <person name="Bennett S."/>
            <person name="Goldman P."/>
            <person name="Korsmeyer S.J."/>
        </authorList>
    </citation>
    <scope>NUCLEOTIDE SEQUENCE [MRNA] (ISOFORM ALPHA)</scope>
    <scope>VARIANT SER-7</scope>
</reference>
<reference key="5">
    <citation type="journal article" date="1988" name="Oncogene Res.">
        <title>Consequences of the t(14;18) chromosomal translocation in follicular lymphoma: deregulated expression of a chimeric and mutated BCL-2 gene.</title>
        <authorList>
            <person name="Hua C."/>
            <person name="Zorn S."/>
            <person name="Jensen J.P."/>
            <person name="Coupland R.W."/>
            <person name="Ko H.S."/>
            <person name="Wright J.J."/>
            <person name="Bakhshi A."/>
        </authorList>
    </citation>
    <scope>NUCLEOTIDE SEQUENCE [GENOMIC DNA / MRNA]</scope>
    <scope>VARIANT SER-7</scope>
    <scope>CHROMOSOMAL TRANSLOCATION</scope>
</reference>
<reference key="6">
    <citation type="submission" date="2003-01" db="EMBL/GenBank/DDBJ databases">
        <authorList>
            <consortium name="NIEHS SNPs program"/>
        </authorList>
    </citation>
    <scope>NUCLEOTIDE SEQUENCE [GENOMIC DNA]</scope>
    <scope>VARIANT THR-43</scope>
</reference>
<reference key="7">
    <citation type="journal article" date="2005" name="Nature">
        <title>DNA sequence and analysis of human chromosome 18.</title>
        <authorList>
            <person name="Nusbaum C."/>
            <person name="Zody M.C."/>
            <person name="Borowsky M.L."/>
            <person name="Kamal M."/>
            <person name="Kodira C.D."/>
            <person name="Taylor T.D."/>
            <person name="Whittaker C.A."/>
            <person name="Chang J.L."/>
            <person name="Cuomo C.A."/>
            <person name="Dewar K."/>
            <person name="FitzGerald M.G."/>
            <person name="Yang X."/>
            <person name="Abouelleil A."/>
            <person name="Allen N.R."/>
            <person name="Anderson S."/>
            <person name="Bloom T."/>
            <person name="Bugalter B."/>
            <person name="Butler J."/>
            <person name="Cook A."/>
            <person name="DeCaprio D."/>
            <person name="Engels R."/>
            <person name="Garber M."/>
            <person name="Gnirke A."/>
            <person name="Hafez N."/>
            <person name="Hall J.L."/>
            <person name="Norman C.H."/>
            <person name="Itoh T."/>
            <person name="Jaffe D.B."/>
            <person name="Kuroki Y."/>
            <person name="Lehoczky J."/>
            <person name="Lui A."/>
            <person name="Macdonald P."/>
            <person name="Mauceli E."/>
            <person name="Mikkelsen T.S."/>
            <person name="Naylor J.W."/>
            <person name="Nicol R."/>
            <person name="Nguyen C."/>
            <person name="Noguchi H."/>
            <person name="O'Leary S.B."/>
            <person name="Piqani B."/>
            <person name="Smith C.L."/>
            <person name="Talamas J.A."/>
            <person name="Topham K."/>
            <person name="Totoki Y."/>
            <person name="Toyoda A."/>
            <person name="Wain H.M."/>
            <person name="Young S.K."/>
            <person name="Zeng Q."/>
            <person name="Zimmer A.R."/>
            <person name="Fujiyama A."/>
            <person name="Hattori M."/>
            <person name="Birren B.W."/>
            <person name="Sakaki Y."/>
            <person name="Lander E.S."/>
        </authorList>
    </citation>
    <scope>NUCLEOTIDE SEQUENCE [LARGE SCALE GENOMIC DNA]</scope>
</reference>
<reference key="8">
    <citation type="submission" date="2005-07" db="EMBL/GenBank/DDBJ databases">
        <authorList>
            <person name="Mural R.J."/>
            <person name="Istrail S."/>
            <person name="Sutton G."/>
            <person name="Florea L."/>
            <person name="Halpern A.L."/>
            <person name="Mobarry C.M."/>
            <person name="Lippert R."/>
            <person name="Walenz B."/>
            <person name="Shatkay H."/>
            <person name="Dew I."/>
            <person name="Miller J.R."/>
            <person name="Flanigan M.J."/>
            <person name="Edwards N.J."/>
            <person name="Bolanos R."/>
            <person name="Fasulo D."/>
            <person name="Halldorsson B.V."/>
            <person name="Hannenhalli S."/>
            <person name="Turner R."/>
            <person name="Yooseph S."/>
            <person name="Lu F."/>
            <person name="Nusskern D.R."/>
            <person name="Shue B.C."/>
            <person name="Zheng X.H."/>
            <person name="Zhong F."/>
            <person name="Delcher A.L."/>
            <person name="Huson D.H."/>
            <person name="Kravitz S.A."/>
            <person name="Mouchard L."/>
            <person name="Reinert K."/>
            <person name="Remington K.A."/>
            <person name="Clark A.G."/>
            <person name="Waterman M.S."/>
            <person name="Eichler E.E."/>
            <person name="Adams M.D."/>
            <person name="Hunkapiller M.W."/>
            <person name="Myers E.W."/>
            <person name="Venter J.C."/>
        </authorList>
    </citation>
    <scope>NUCLEOTIDE SEQUENCE [LARGE SCALE GENOMIC DNA]</scope>
</reference>
<reference key="9">
    <citation type="journal article" date="2004" name="Genome Res.">
        <title>The status, quality, and expansion of the NIH full-length cDNA project: the Mammalian Gene Collection (MGC).</title>
        <authorList>
            <consortium name="The MGC Project Team"/>
        </authorList>
    </citation>
    <scope>NUCLEOTIDE SEQUENCE [LARGE SCALE MRNA] (ISOFORM ALPHA)</scope>
    <source>
        <tissue>Testis</tissue>
    </source>
</reference>
<reference key="10">
    <citation type="journal article" date="1992" name="Blood">
        <title>Frequent incidence of somatic mutations in translocated BCL2 oncogenes of non-Hodgkin's lymphomas.</title>
        <authorList>
            <person name="Tanaka S."/>
            <person name="Louie D.C."/>
            <person name="Kant J.A."/>
            <person name="Reed J.C."/>
        </authorList>
    </citation>
    <scope>NUCLEOTIDE SEQUENCE [GENOMIC DNA] OF 1-131 (ISOFORM ALPHA)</scope>
    <scope>VARIANTS NON-HODGKIN LYMPHOMA SER-59 AND ILE-93</scope>
</reference>
<reference key="11">
    <citation type="journal article" date="1990" name="Nature">
        <title>Bcl-2 is an inner mitochondrial membrane protein that blocks programmed cell death.</title>
        <authorList>
            <person name="Hockenbery D."/>
            <person name="Nunez G."/>
            <person name="Milliman C."/>
            <person name="Schreiber R.D."/>
            <person name="Korsmeyer S.J."/>
        </authorList>
    </citation>
    <scope>SUBCELLULAR LOCATION</scope>
</reference>
<reference key="12">
    <citation type="journal article" date="1994" name="Nature">
        <title>BH1 and BH2 domains of Bcl-2 are required for inhibition of apoptosis and heterodimerization with Bax.</title>
        <authorList>
            <person name="Yin X.-M."/>
            <person name="Oltvai Z.N."/>
            <person name="Korsmeyer S.J."/>
        </authorList>
    </citation>
    <scope>FUNCTION</scope>
    <scope>INTERACTION WITH BAX</scope>
    <scope>HOMODIMERIZATION</scope>
    <scope>SUBUNIT</scope>
    <scope>MUTAGENESIS OF 138-PHE--GLY-141; TRP-144; GLY-145; ARG-146; TRP-188; GLN-190; ASP-191; ASN-192; 194-GLY--ALA-197 AND GLU-200</scope>
</reference>
<reference key="13">
    <citation type="journal article" date="1997" name="EMBO J.">
        <title>BAG-1 modulates the chaperone activity of Hsp70/Hsc70.</title>
        <authorList>
            <person name="Takayama S."/>
            <person name="Bimston D.N."/>
            <person name="Matsuzawa S.-I."/>
            <person name="Freeman B.C."/>
            <person name="Aime-Sempe C."/>
            <person name="Xie Z."/>
            <person name="Morimoto R.I."/>
            <person name="Reed J.C."/>
        </authorList>
    </citation>
    <scope>INTERACTION WITH BAG1</scope>
</reference>
<reference key="14">
    <citation type="journal article" date="1997" name="Science">
        <title>Conversion of Bcl-2 to a Bax-like death effector by caspases.</title>
        <authorList>
            <person name="Cheng E.H.-Y."/>
            <person name="Kirsch D.G."/>
            <person name="Clem R.J."/>
            <person name="Ravi R."/>
            <person name="Kastan M.B."/>
            <person name="Bedi A."/>
            <person name="Ueno K."/>
            <person name="Hardwick J.M."/>
        </authorList>
    </citation>
    <scope>CLEAVAGE BY CASPASES</scope>
    <scope>MUTAGENESIS OF ASP-34 AND ASP-64</scope>
</reference>
<reference key="15">
    <citation type="journal article" date="1996" name="Mol. Cell. Biol.">
        <title>The p53-binding protein 53BP2 also interacts with Bcl2 and impedes cell cycle progression at G2/M.</title>
        <authorList>
            <person name="Naumovski L."/>
            <person name="Cleary M.L."/>
        </authorList>
    </citation>
    <scope>INTERACTION WITH TP53BP2</scope>
</reference>
<reference key="16">
    <citation type="journal article" date="2001" name="Leukemia">
        <title>Phosphorylation of Bcl2 and regulation of apoptosis.</title>
        <authorList>
            <person name="Ruvolo P.P."/>
            <person name="Deng X."/>
            <person name="May W.S."/>
        </authorList>
    </citation>
    <scope>REVIEW ON PHOSPHORYLATION</scope>
</reference>
<reference key="17">
    <citation type="journal article" date="1999" name="Mol. Cell. Biol.">
        <title>BCL-2 is phosphorylated and inactivated by an ASK1/Jun N-terminal protein kinase pathway normally activated at G(2)/M.</title>
        <authorList>
            <person name="Yamamoto K."/>
            <person name="Ichijo H."/>
            <person name="Korsmeyer S.J."/>
        </authorList>
    </citation>
    <scope>PHOSPHORYLATION BY ASK1/JNK1</scope>
</reference>
<reference key="18">
    <citation type="journal article" date="2001" name="Mol. Cell">
        <title>PUMA induces the rapid apoptosis of colorectal cancer cells.</title>
        <authorList>
            <person name="Yu J."/>
            <person name="Zhang L."/>
            <person name="Hwang P.M."/>
            <person name="Kinzler K.W."/>
            <person name="Vogelstein B."/>
        </authorList>
    </citation>
    <scope>INTERACTION WITH BBC3 AND BCL2L1</scope>
</reference>
<reference key="19">
    <citation type="journal article" date="2003" name="Biochem. Biophys. Res. Commun.">
        <title>BNIPL-2, a novel homologue of BNIP-2, interacts with Bcl-2 and Cdc42GAP in apoptosis.</title>
        <authorList>
            <person name="Qin W."/>
            <person name="Hu J."/>
            <person name="Guo M."/>
            <person name="Xu J."/>
            <person name="Li J."/>
            <person name="Yao G."/>
            <person name="Zhou X."/>
            <person name="Jiang H."/>
            <person name="Zhang P."/>
            <person name="Shen L."/>
            <person name="Wan D."/>
            <person name="Gu J."/>
        </authorList>
    </citation>
    <scope>INTERACTION WITH BNIPL</scope>
</reference>
<reference key="20">
    <citation type="journal article" date="2005" name="FEBS Lett.">
        <title>The flexible loop of Bcl-2 is required for molecular interaction with immunosuppressant FK-506 binding protein 38 (FKBP38).</title>
        <authorList>
            <person name="Kang C.B."/>
            <person name="Tai J."/>
            <person name="Chia J."/>
            <person name="Yoon H.S."/>
        </authorList>
    </citation>
    <scope>INTERACTION WITH FKBP8</scope>
</reference>
<reference key="21">
    <citation type="journal article" date="2005" name="J. Biol. Chem.">
        <title>p21-activated Kinase 1 (Pak1)-dependent phosphorylation of Raf-1 regulates its mitochondrial localization, phosphorylation of BAD, and Bcl-2 association.</title>
        <authorList>
            <person name="Jin S."/>
            <person name="Zhuo Y."/>
            <person name="Guo W."/>
            <person name="Field J."/>
        </authorList>
    </citation>
    <scope>INTERACTION WITH RAF1</scope>
</reference>
<reference key="22">
    <citation type="journal article" date="2005" name="J. Cell. Biochem.">
        <title>BMRP is a Bcl-2 binding protein that induces apoptosis.</title>
        <authorList>
            <person name="Chintharlapalli S.R."/>
            <person name="Jasti M."/>
            <person name="Malladi S."/>
            <person name="Parsa K.V.L."/>
            <person name="Ballestero R.P."/>
            <person name="Gonzalez-Garcia M."/>
        </authorList>
    </citation>
    <scope>INTERACTION WITH MRPL41</scope>
</reference>
<reference key="23">
    <citation type="journal article" date="2006" name="J. Biol. Chem.">
        <title>Bcl-2 localized at the nuclear compartment induces apoptosis after transient overexpression.</title>
        <authorList>
            <person name="Portier B.P."/>
            <person name="Taglialatela G."/>
        </authorList>
    </citation>
    <scope>INTERACTION WITH FKBP8</scope>
</reference>
<reference key="24">
    <citation type="journal article" date="2007" name="Cell">
        <title>Bcl-2 and Bcl-XL regulate proinflammatory caspase-1 activation by interaction with NALP1.</title>
        <authorList>
            <person name="Bruey J.M."/>
            <person name="Bruey-Sedano N."/>
            <person name="Luciano F."/>
            <person name="Zhai D."/>
            <person name="Balpai R."/>
            <person name="Xu C."/>
            <person name="Kress C.L."/>
            <person name="Bailly-Maitre B."/>
            <person name="Li X."/>
            <person name="Osterman A."/>
            <person name="Matsuzawa S."/>
            <person name="Terskikh A.V."/>
            <person name="Faustin B."/>
            <person name="Reed J.C."/>
        </authorList>
    </citation>
    <scope>FUNCTION</scope>
    <scope>INTERACTION WITH NLRP1</scope>
    <scope>DOMAIN</scope>
    <scope>MUTAGENESIS OF GLY-145</scope>
</reference>
<reference key="25">
    <citation type="journal article" date="2008" name="Mol. Cell">
        <title>JNK1-mediated phosphorylation of Bcl-2 regulates starvation-induced autophagy.</title>
        <authorList>
            <person name="Wei Y."/>
            <person name="Pattingre S."/>
            <person name="Sinha S."/>
            <person name="Bassik M."/>
            <person name="Levine B."/>
        </authorList>
    </citation>
    <scope>PHOSPHORYLATION AT THR-69; SER-70 AND SER-87 BY MAPK8/JNK1</scope>
    <scope>INTERACTION WITH BECN1</scope>
    <scope>FUNCTION</scope>
</reference>
<reference key="26">
    <citation type="journal article" date="2009" name="Cancer Res.">
        <title>Identification of a protein, G0S2, that lacks Bcl-2 homology domains and interacts with and antagonizes Bcl-2.</title>
        <authorList>
            <person name="Welch C."/>
            <person name="Santra M.K."/>
            <person name="El-Assaad W."/>
            <person name="Zhu X."/>
            <person name="Huber W.E."/>
            <person name="Keys R.A."/>
            <person name="Teodoro J.G."/>
            <person name="Green M.R."/>
        </authorList>
    </citation>
    <scope>INTERACTION WITH G0S2</scope>
</reference>
<reference key="27">
    <citation type="journal article" date="2009" name="J. Biol. Chem.">
        <title>Cyclophilin D interacts with Bcl2 and exerts an anti-apoptotic effect.</title>
        <authorList>
            <person name="Eliseev R.A."/>
            <person name="Malecki J."/>
            <person name="Lester T."/>
            <person name="Zhang Y."/>
            <person name="Humphrey J."/>
            <person name="Gunter T.E."/>
        </authorList>
    </citation>
    <scope>INTERACTION WITH PPIF</scope>
</reference>
<reference key="28">
    <citation type="journal article" date="2010" name="Biochem. Biophys. Res. Commun.">
        <title>Prolyl hydroxylase 3 interacts with Bcl-2 to regulate doxorubicin-induced apoptosis in H9c2 cells.</title>
        <authorList>
            <person name="Liu Y."/>
            <person name="Huo Z."/>
            <person name="Yan B."/>
            <person name="Lin X."/>
            <person name="Zhou Z.N."/>
            <person name="Liang X."/>
            <person name="Zhu W."/>
            <person name="Liang D."/>
            <person name="Li L."/>
            <person name="Liu Y."/>
            <person name="Zhao H."/>
            <person name="Sun Y."/>
            <person name="Chen Y.H."/>
        </authorList>
    </citation>
    <scope>INTERACTION WITH EGLN3</scope>
</reference>
<reference key="29">
    <citation type="journal article" date="2011" name="EMBO J.">
        <title>Mitochondrial BCL-2 inhibits AMBRA1-induced autophagy.</title>
        <authorList>
            <person name="Strappazzon F."/>
            <person name="Vietri-Rudan M."/>
            <person name="Campello S."/>
            <person name="Nazio F."/>
            <person name="Florenzano F."/>
            <person name="Fimia G.M."/>
            <person name="Piacentini M."/>
            <person name="Levine B."/>
            <person name="Cecconi F."/>
        </authorList>
    </citation>
    <scope>FUNCTION</scope>
    <scope>SUBCELLULAR LOCATION</scope>
    <scope>INTERACTION WITH BECN1 AND AMBRA1</scope>
</reference>
<reference key="30">
    <citation type="journal article" date="2010" name="J. Biol. Chem.">
        <title>Parkin mono-ubiquitinates Bcl-2 and regulates autophagy.</title>
        <authorList>
            <person name="Chen D."/>
            <person name="Gao F."/>
            <person name="Li B."/>
            <person name="Wang H."/>
            <person name="Xu Y."/>
            <person name="Zhu C."/>
            <person name="Wang G."/>
        </authorList>
    </citation>
    <scope>FUNCTION</scope>
    <scope>UBIQUITINATION BY PRKN</scope>
</reference>
<reference key="31">
    <citation type="journal article" date="2012" name="Protein Cell">
        <title>Human Bop is a novel BH3-only member of the Bcl-2 protein family.</title>
        <authorList>
            <person name="Zhang X."/>
            <person name="Weng C."/>
            <person name="Li Y."/>
            <person name="Wang X."/>
            <person name="Jiang C."/>
            <person name="Li X."/>
            <person name="Xu Y."/>
            <person name="Chen Q."/>
            <person name="Pan L."/>
            <person name="Tang H."/>
        </authorList>
    </citation>
    <scope>INTERACTION WITH RTL10/BOP</scope>
</reference>
<reference key="32">
    <citation type="journal article" date="2013" name="Biochem. J.">
        <title>Mitochondrion-associated protein LRPPRC suppresses the initiation of basal levels of autophagy via enhancing Bcl-2 stability.</title>
        <authorList>
            <person name="Zou J."/>
            <person name="Yue F."/>
            <person name="Jiang X."/>
            <person name="Li W."/>
            <person name="Yi J."/>
            <person name="Liu L."/>
        </authorList>
    </citation>
    <scope>IDENTIFICATION IN A COMPLEX WITH LPPRC AND BECN1</scope>
</reference>
<reference key="33">
    <citation type="journal article" date="2013" name="Proc. Natl. Acad. Sci. U.S.A.">
        <title>Related F-box proteins control cell death in Caenorhabditis elegans and human lymphoma.</title>
        <authorList>
            <person name="Chiorazzi M."/>
            <person name="Rui L."/>
            <person name="Yang Y."/>
            <person name="Ceribelli M."/>
            <person name="Tishbi N."/>
            <person name="Maurer C.W."/>
            <person name="Ranuncolo S.M."/>
            <person name="Zhao H."/>
            <person name="Xu W."/>
            <person name="Chan W.C."/>
            <person name="Jaffe E.S."/>
            <person name="Gascoyne R.D."/>
            <person name="Campo E."/>
            <person name="Rosenwald A."/>
            <person name="Ott G."/>
            <person name="Delabie J."/>
            <person name="Rimsza L.M."/>
            <person name="Shaham S."/>
            <person name="Staudt L.M."/>
        </authorList>
    </citation>
    <scope>INTERACTION WITH FBXO10</scope>
    <scope>UBIQUITINATION</scope>
    <scope>IDENTIFICATION IN THE SCF(FBXO10) COMPLEX</scope>
</reference>
<reference key="34">
    <citation type="journal article" date="2015" name="J. Virol.">
        <title>Tom70 mediates Sendai virus-induced apoptosis on mitochondria.</title>
        <authorList>
            <person name="Wei B."/>
            <person name="Cui Y."/>
            <person name="Huang Y."/>
            <person name="Liu H."/>
            <person name="Li L."/>
            <person name="Li M."/>
            <person name="Ruan K.C."/>
            <person name="Zhou Q."/>
            <person name="Wang C."/>
        </authorList>
    </citation>
    <scope>INTERACTION WITH BAX AND IRF3</scope>
</reference>
<reference key="35">
    <citation type="journal article" date="2015" name="Proteomics">
        <title>N-terminome analysis of the human mitochondrial proteome.</title>
        <authorList>
            <person name="Vaca Jacome A.S."/>
            <person name="Rabilloud T."/>
            <person name="Schaeffer-Reiss C."/>
            <person name="Rompais M."/>
            <person name="Ayoub D."/>
            <person name="Lane L."/>
            <person name="Bairoch A."/>
            <person name="Van Dorsselaer A."/>
            <person name="Carapito C."/>
        </authorList>
    </citation>
    <scope>IDENTIFICATION BY MASS SPECTROMETRY [LARGE SCALE ANALYSIS]</scope>
</reference>
<reference key="36">
    <citation type="journal article" date="2017" name="Cell Rep.">
        <title>Degradation of Bcl-2 by XIAP and ARTS Promotes Apoptosis.</title>
        <authorList>
            <person name="Edison N."/>
            <person name="Curtz Y."/>
            <person name="Paland N."/>
            <person name="Mamriev D."/>
            <person name="Chorubczyk N."/>
            <person name="Haviv-Reingewertz T."/>
            <person name="Kfir N."/>
            <person name="Morgenstern D."/>
            <person name="Kupervaser M."/>
            <person name="Kagan J."/>
            <person name="Kim H.T."/>
            <person name="Larisch S."/>
        </authorList>
    </citation>
    <scope>IDENTIFICATION IN A COMPLEX WITH SEPTIN4 AND XIAP</scope>
    <scope>INTERACTION WITH SEPTIN4 ISOFORM ARTS AND XIAP</scope>
    <scope>UBIQUITINATION BY XIAP</scope>
</reference>
<reference key="37">
    <citation type="journal article" date="2019" name="Sci. Adv.">
        <title>BAP31 regulates mitochondrial function via interaction with Tom40 within ER-mitochondria contact sites.</title>
        <authorList>
            <person name="Namba T."/>
        </authorList>
    </citation>
    <scope>INTERACTION WITH BCAP31</scope>
</reference>
<reference key="38">
    <citation type="journal article" date="2021" name="Folia Parasitol.">
        <title>Toxoplasma gondii ROP17 promotes autophagy via the Bcl-2-Beclin 1 pathway.</title>
        <authorList>
            <person name="Guo M."/>
            <person name="Sun J."/>
            <person name="Wang W.T."/>
            <person name="Liu H.Y."/>
            <person name="Liu Y.H."/>
            <person name="Qin K.R."/>
            <person name="Hu J.R."/>
            <person name="Li X.Y."/>
            <person name="Liu H.L."/>
            <person name="Wang W."/>
            <person name="Chen Z.Y."/>
            <person name="Wang C.F."/>
            <person name="Wang H.L."/>
        </authorList>
    </citation>
    <scope>INTERACTION WITH TOXOPLASMA ROP17 (MICROBIAL INFECTION)</scope>
</reference>
<reference key="39">
    <citation type="journal article" date="2001" name="Proc. Natl. Acad. Sci. U.S.A.">
        <title>Solution structure of the antiapoptotic protein bcl-2.</title>
        <authorList>
            <person name="Petros A.M."/>
            <person name="Medek A."/>
            <person name="Nettesheim D.G."/>
            <person name="Kim D.H."/>
            <person name="Yoon H.S."/>
            <person name="Swift K."/>
            <person name="Matayoshi E.D."/>
            <person name="Oltersdorf T."/>
            <person name="Fesik S.W."/>
        </authorList>
    </citation>
    <scope>STRUCTURE BY NMR OF 1-207</scope>
</reference>
<reference key="40">
    <citation type="journal article" date="2005" name="Nature">
        <title>An inhibitor of Bcl-2 family proteins induces regression of solid tumours.</title>
        <authorList>
            <person name="Oltersdorf T."/>
            <person name="Elmore S.W."/>
            <person name="Shoemaker A.R."/>
            <person name="Armstrong R.C."/>
            <person name="Augeri D.J."/>
            <person name="Belli B.A."/>
            <person name="Bruncko M."/>
            <person name="Deckwerth T.L."/>
            <person name="Dinges J."/>
            <person name="Hajduk P.J."/>
            <person name="Joseph M.K."/>
            <person name="Kitada S."/>
            <person name="Korsmeyer S.J."/>
            <person name="Kunzer A.R."/>
            <person name="Letai A."/>
            <person name="Li C."/>
            <person name="Mitten M.J."/>
            <person name="Nettesheim D.G."/>
            <person name="Ng S.-C."/>
            <person name="Nimmer P.M."/>
            <person name="O'Connor J.M."/>
            <person name="Oleksijew A."/>
            <person name="Petros A.M."/>
            <person name="Reed J.C."/>
            <person name="Shen W."/>
            <person name="Tahir S.K."/>
            <person name="Thompson C.B."/>
            <person name="Tomaselli K.J."/>
            <person name="Wang B."/>
            <person name="Wendt M.D."/>
            <person name="Zhang H."/>
            <person name="Fesik S.W."/>
            <person name="Rosenberg S.H."/>
        </authorList>
    </citation>
    <scope>STRUCTURE BY NMR OF 45-207</scope>
</reference>
<reference key="41">
    <citation type="journal article" date="2007" name="J. Med. Chem.">
        <title>Studies leading to potent, dual inhibitors of Bcl-2 and Bcl-xL.</title>
        <authorList>
            <person name="Bruncko M."/>
            <person name="Oost T.K."/>
            <person name="Belli B.A."/>
            <person name="Ding H."/>
            <person name="Joseph M.K."/>
            <person name="Kunzer A."/>
            <person name="Martineau D."/>
            <person name="McClellan W.J."/>
            <person name="Mitten M."/>
            <person name="Ng S.-C."/>
            <person name="Nimmer P.M."/>
            <person name="Oltersdorf T."/>
            <person name="Park C.-M."/>
            <person name="Petros A.M."/>
            <person name="Shoemaker A.R."/>
            <person name="Song X."/>
            <person name="Wang X."/>
            <person name="Wendt M.D."/>
            <person name="Zhang H."/>
            <person name="Fesik S.W."/>
            <person name="Rosenberg S.H."/>
            <person name="Elmore S.W."/>
        </authorList>
    </citation>
    <scope>STRUCTURE BY NMR OF 44-207</scope>
</reference>
<feature type="chain" id="PRO_0000143048" description="Apoptosis regulator Bcl-2">
    <location>
        <begin position="1"/>
        <end position="239"/>
    </location>
</feature>
<feature type="transmembrane region" description="Helical" evidence="2">
    <location>
        <begin position="212"/>
        <end position="233"/>
    </location>
</feature>
<feature type="region of interest" description="Disordered" evidence="4">
    <location>
        <begin position="39"/>
        <end position="85"/>
    </location>
</feature>
<feature type="region of interest" description="Required for interaction with SEPTIN4 isoform ARTS. Required XIAP-mediated ubiquitination and apoptosis" evidence="28">
    <location>
        <begin position="92"/>
        <end position="107"/>
    </location>
</feature>
<feature type="short sequence motif" description="BH4" evidence="3">
    <location>
        <begin position="10"/>
        <end position="30"/>
    </location>
</feature>
<feature type="short sequence motif" description="BH3" evidence="2">
    <location>
        <begin position="93"/>
        <end position="107"/>
    </location>
</feature>
<feature type="short sequence motif" description="BH1" evidence="2">
    <location>
        <begin position="136"/>
        <end position="155"/>
    </location>
</feature>
<feature type="short sequence motif" description="BH2" evidence="2">
    <location>
        <begin position="187"/>
        <end position="202"/>
    </location>
</feature>
<feature type="compositionally biased region" description="Low complexity" evidence="4">
    <location>
        <begin position="75"/>
        <end position="85"/>
    </location>
</feature>
<feature type="site" description="Cleavage; by caspase-3">
    <location>
        <begin position="34"/>
        <end position="35"/>
    </location>
</feature>
<feature type="modified residue" description="Phosphothreonine; by MAPK8" evidence="15">
    <location>
        <position position="69"/>
    </location>
</feature>
<feature type="modified residue" description="Phosphoserine; by MAPK8 and PKC" evidence="15">
    <location>
        <position position="70"/>
    </location>
</feature>
<feature type="modified residue" description="Phosphoserine; by MAPK8" evidence="15">
    <location>
        <position position="87"/>
    </location>
</feature>
<feature type="splice variant" id="VSP_000512" description="In isoform Beta." evidence="38">
    <original>DAFVELYGPSMRPLFDFSWLSLKTLLSLALVGACITLGAYLGHK</original>
    <variation>VGALGDVSLG</variation>
    <location>
        <begin position="196"/>
        <end position="239"/>
    </location>
</feature>
<feature type="sequence variant" id="VAR_000827" evidence="26 30">
    <original>T</original>
    <variation>S</variation>
    <location>
        <position position="7"/>
    </location>
</feature>
<feature type="sequence variant" id="VAR_014716" description="In dbSNP:rs1800477." evidence="36">
    <original>A</original>
    <variation>T</variation>
    <location>
        <position position="43"/>
    </location>
</feature>
<feature type="sequence variant" id="VAR_000828" description="In non-Hodgkin lymphoma; somatic mutation." evidence="8">
    <original>P</original>
    <variation>S</variation>
    <location>
        <position position="59"/>
    </location>
</feature>
<feature type="sequence variant" id="VAR_000829" description="In non-Hodgkin lymphoma; somatic mutation." evidence="8">
    <original>V</original>
    <variation>I</variation>
    <location>
        <position position="93"/>
    </location>
</feature>
<feature type="mutagenesis site" description="Abolishes cleavage by caspase-3." evidence="35">
    <original>D</original>
    <variation>A</variation>
    <location>
        <position position="34"/>
    </location>
</feature>
<feature type="mutagenesis site" description="No effect on cleavage by caspase-3." evidence="35">
    <original>D</original>
    <variation>A</variation>
    <location>
        <position position="64"/>
    </location>
</feature>
<feature type="mutagenesis site" description="Loss of BAX-binding and of anti-apoptotic activity." evidence="32">
    <original>FRDG</original>
    <variation>AAAA</variation>
    <location>
        <begin position="138"/>
        <end position="141"/>
    </location>
</feature>
<feature type="mutagenesis site" description="Loss of BAX-binding and of anti-apoptotic activity; when associated with A-145 and A146." evidence="32">
    <original>W</original>
    <variation>A</variation>
    <location>
        <position position="144"/>
    </location>
</feature>
<feature type="mutagenesis site" description="Loss of BAX-binding and of anti-apoptotic activity. No effect on NLRP1-induced IL1B release, nor on homodimerization. Loss of BAX-binding and of anti-apoptotic activity; when associated with A-145 and A146." evidence="14 32">
    <original>G</original>
    <variation>A</variation>
    <location>
        <position position="145"/>
    </location>
</feature>
<feature type="mutagenesis site" description="Loss of BAX-binding and of anti-apoptotic activity. No effect on homodimerization." evidence="14 32">
    <original>G</original>
    <variation>E</variation>
    <location>
        <position position="145"/>
    </location>
</feature>
<feature type="mutagenesis site" description="Loss of BAX-binding and of anti-apoptotic activity; when associated with A-144 and A145." evidence="32">
    <original>R</original>
    <variation>A</variation>
    <location>
        <position position="146"/>
    </location>
</feature>
<feature type="mutagenesis site" description="Loss of BAX-binding and of anti-apoptotic activity. No effect on homodimerization." evidence="32">
    <original>W</original>
    <variation>A</variation>
    <location>
        <position position="188"/>
    </location>
</feature>
<feature type="mutagenesis site" description="Partial loss of BAX-binding and 50% decrease in anti-apoptotic activity; when associated with A-191 and A-192. No effect on homodimerization; when associated with L-190 and A-191." evidence="32">
    <original>Q</original>
    <variation>L</variation>
    <location>
        <position position="190"/>
    </location>
</feature>
<feature type="mutagenesis site" description="No effect on BAX-binding, nor on anti-apoptotic activity. Partial loss of BAX-binding and 50% decrease in anti-apoptotic activity; when associated with L-190 and A-192. No effect on homodimerization; when associated with L-190 and A-191." evidence="32">
    <original>D</original>
    <variation>A</variation>
    <location>
        <position position="191"/>
    </location>
</feature>
<feature type="mutagenesis site" description="Partial loss of BAX-binding and 50% decrease in anti-apoptotic activity; when associated with L-190 and A-191. No effect on homodimerization; when associated with L-190 and A-191." evidence="32">
    <original>N</original>
    <variation>A</variation>
    <location>
        <position position="192"/>
    </location>
</feature>
<feature type="mutagenesis site" description="Loss of BAX-binding and of anti-apoptotic activity. May also affect protein stability." evidence="32">
    <location>
        <begin position="194"/>
        <end position="197"/>
    </location>
</feature>
<feature type="mutagenesis site" description="Partial loss of BAX-binding and 50% decrease in anti-apoptotic activity." evidence="32">
    <original>E</original>
    <variation>A</variation>
    <location>
        <position position="200"/>
    </location>
</feature>
<feature type="sequence conflict" description="In Ref. 4; CAA29778." evidence="39" ref="4">
    <original>I</original>
    <variation>F</variation>
    <location>
        <position position="48"/>
    </location>
</feature>
<feature type="sequence conflict" description="In Ref. 3; AAA35591." evidence="39" ref="3">
    <original>P</original>
    <variation>T</variation>
    <location>
        <position position="59"/>
    </location>
</feature>
<feature type="sequence conflict" description="In Ref. 10; AAD14111." evidence="39" ref="10">
    <original>T</original>
    <variation>A</variation>
    <location>
        <position position="96"/>
    </location>
</feature>
<feature type="sequence conflict" description="In Ref. 10; AAD14111." evidence="39" ref="10">
    <original>R</original>
    <variation>G</variation>
    <location>
        <position position="110"/>
    </location>
</feature>
<feature type="sequence conflict" description="In Ref. 3; AAA35591." evidence="39" ref="3">
    <original>S</original>
    <variation>R</variation>
    <location>
        <position position="117"/>
    </location>
</feature>
<feature type="sequence conflict" description="In Ref. 4; CAA29778." evidence="39" ref="4">
    <original>R</original>
    <variation>C</variation>
    <location>
        <position position="129"/>
    </location>
</feature>
<feature type="helix" evidence="41">
    <location>
        <begin position="11"/>
        <end position="24"/>
    </location>
</feature>
<feature type="turn" evidence="41">
    <location>
        <begin position="25"/>
        <end position="27"/>
    </location>
</feature>
<feature type="helix" evidence="41">
    <location>
        <begin position="31"/>
        <end position="34"/>
    </location>
</feature>
<feature type="helix" evidence="41">
    <location>
        <begin position="50"/>
        <end position="52"/>
    </location>
</feature>
<feature type="helix" evidence="40">
    <location>
        <begin position="63"/>
        <end position="66"/>
    </location>
</feature>
<feature type="helix" evidence="41">
    <location>
        <begin position="93"/>
        <end position="107"/>
    </location>
</feature>
<feature type="helix" evidence="41">
    <location>
        <begin position="109"/>
        <end position="118"/>
    </location>
</feature>
<feature type="turn" evidence="41">
    <location>
        <begin position="123"/>
        <end position="125"/>
    </location>
</feature>
<feature type="helix" evidence="41">
    <location>
        <begin position="126"/>
        <end position="137"/>
    </location>
</feature>
<feature type="turn" evidence="41">
    <location>
        <begin position="138"/>
        <end position="140"/>
    </location>
</feature>
<feature type="helix" evidence="41">
    <location>
        <begin position="144"/>
        <end position="163"/>
    </location>
</feature>
<feature type="helix" evidence="41">
    <location>
        <begin position="169"/>
        <end position="184"/>
    </location>
</feature>
<feature type="helix" evidence="41">
    <location>
        <begin position="186"/>
        <end position="191"/>
    </location>
</feature>
<feature type="helix" evidence="41">
    <location>
        <begin position="194"/>
        <end position="202"/>
    </location>
</feature>
<feature type="strand" evidence="41">
    <location>
        <begin position="203"/>
        <end position="205"/>
    </location>
</feature>
<feature type="sequence conflict" description="In Ref. 1; AAA51814." evidence="39" ref="1">
    <original>L</original>
    <variation>S</variation>
    <location sequence="P10415-2">
        <position position="199"/>
    </location>
</feature>
<evidence type="ECO:0000250" key="1">
    <source>
        <dbReference type="UniProtKB" id="P10417"/>
    </source>
</evidence>
<evidence type="ECO:0000255" key="2"/>
<evidence type="ECO:0000255" key="3">
    <source>
        <dbReference type="PROSITE-ProRule" id="PRU00025"/>
    </source>
</evidence>
<evidence type="ECO:0000256" key="4">
    <source>
        <dbReference type="SAM" id="MobiDB-lite"/>
    </source>
</evidence>
<evidence type="ECO:0000269" key="5">
    <source>
    </source>
</evidence>
<evidence type="ECO:0000269" key="6">
    <source>
    </source>
</evidence>
<evidence type="ECO:0000269" key="7">
    <source>
    </source>
</evidence>
<evidence type="ECO:0000269" key="8">
    <source>
    </source>
</evidence>
<evidence type="ECO:0000269" key="9">
    <source>
    </source>
</evidence>
<evidence type="ECO:0000269" key="10">
    <source>
    </source>
</evidence>
<evidence type="ECO:0000269" key="11">
    <source>
    </source>
</evidence>
<evidence type="ECO:0000269" key="12">
    <source>
    </source>
</evidence>
<evidence type="ECO:0000269" key="13">
    <source>
    </source>
</evidence>
<evidence type="ECO:0000269" key="14">
    <source>
    </source>
</evidence>
<evidence type="ECO:0000269" key="15">
    <source>
    </source>
</evidence>
<evidence type="ECO:0000269" key="16">
    <source>
    </source>
</evidence>
<evidence type="ECO:0000269" key="17">
    <source>
    </source>
</evidence>
<evidence type="ECO:0000269" key="18">
    <source>
    </source>
</evidence>
<evidence type="ECO:0000269" key="19">
    <source>
    </source>
</evidence>
<evidence type="ECO:0000269" key="20">
    <source>
    </source>
</evidence>
<evidence type="ECO:0000269" key="21">
    <source>
    </source>
</evidence>
<evidence type="ECO:0000269" key="22">
    <source>
    </source>
</evidence>
<evidence type="ECO:0000269" key="23">
    <source>
    </source>
</evidence>
<evidence type="ECO:0000269" key="24">
    <source>
    </source>
</evidence>
<evidence type="ECO:0000269" key="25">
    <source>
    </source>
</evidence>
<evidence type="ECO:0000269" key="26">
    <source>
    </source>
</evidence>
<evidence type="ECO:0000269" key="27">
    <source>
    </source>
</evidence>
<evidence type="ECO:0000269" key="28">
    <source>
    </source>
</evidence>
<evidence type="ECO:0000269" key="29">
    <source>
    </source>
</evidence>
<evidence type="ECO:0000269" key="30">
    <source>
    </source>
</evidence>
<evidence type="ECO:0000269" key="31">
    <source>
    </source>
</evidence>
<evidence type="ECO:0000269" key="32">
    <source>
    </source>
</evidence>
<evidence type="ECO:0000269" key="33">
    <source>
    </source>
</evidence>
<evidence type="ECO:0000269" key="34">
    <source>
    </source>
</evidence>
<evidence type="ECO:0000269" key="35">
    <source>
    </source>
</evidence>
<evidence type="ECO:0000269" key="36">
    <source ref="6"/>
</evidence>
<evidence type="ECO:0000303" key="37">
    <source>
    </source>
</evidence>
<evidence type="ECO:0000303" key="38">
    <source>
    </source>
</evidence>
<evidence type="ECO:0000305" key="39"/>
<evidence type="ECO:0007829" key="40">
    <source>
        <dbReference type="PDB" id="5VAX"/>
    </source>
</evidence>
<evidence type="ECO:0007829" key="41">
    <source>
        <dbReference type="PDB" id="8HTS"/>
    </source>
</evidence>
<name>BCL2_HUMAN</name>
<dbReference type="EMBL" id="M13994">
    <property type="protein sequence ID" value="AAA51813.1"/>
    <property type="status" value="ALT_SEQ"/>
    <property type="molecule type" value="mRNA"/>
</dbReference>
<dbReference type="EMBL" id="M13995">
    <property type="protein sequence ID" value="AAA51814.1"/>
    <property type="status" value="ALT_SEQ"/>
    <property type="molecule type" value="mRNA"/>
</dbReference>
<dbReference type="EMBL" id="M14745">
    <property type="protein sequence ID" value="AAA35591.1"/>
    <property type="molecule type" value="mRNA"/>
</dbReference>
<dbReference type="EMBL" id="X06487">
    <property type="protein sequence ID" value="CAA29778.1"/>
    <property type="molecule type" value="mRNA"/>
</dbReference>
<dbReference type="EMBL" id="AY220759">
    <property type="protein sequence ID" value="AAO26045.1"/>
    <property type="molecule type" value="Genomic_DNA"/>
</dbReference>
<dbReference type="EMBL" id="AC021803">
    <property type="status" value="NOT_ANNOTATED_CDS"/>
    <property type="molecule type" value="Genomic_DNA"/>
</dbReference>
<dbReference type="EMBL" id="AC022726">
    <property type="status" value="NOT_ANNOTATED_CDS"/>
    <property type="molecule type" value="Genomic_DNA"/>
</dbReference>
<dbReference type="EMBL" id="CH471096">
    <property type="protein sequence ID" value="EAW63137.1"/>
    <property type="molecule type" value="Genomic_DNA"/>
</dbReference>
<dbReference type="EMBL" id="BC027258">
    <property type="protein sequence ID" value="AAH27258.1"/>
    <property type="molecule type" value="mRNA"/>
</dbReference>
<dbReference type="EMBL" id="S72602">
    <property type="protein sequence ID" value="AAD14111.1"/>
    <property type="status" value="ALT_SEQ"/>
    <property type="molecule type" value="Genomic_DNA"/>
</dbReference>
<dbReference type="CCDS" id="CCDS11981.1">
    <molecule id="P10415-1"/>
</dbReference>
<dbReference type="CCDS" id="CCDS45882.1">
    <molecule id="P10415-2"/>
</dbReference>
<dbReference type="PIR" id="B29409">
    <property type="entry name" value="TVHUB1"/>
</dbReference>
<dbReference type="PIR" id="C37332">
    <property type="entry name" value="TVHUA1"/>
</dbReference>
<dbReference type="RefSeq" id="NP_000624.2">
    <molecule id="P10415-1"/>
    <property type="nucleotide sequence ID" value="NM_000633.3"/>
</dbReference>
<dbReference type="RefSeq" id="NP_000648.2">
    <molecule id="P10415-2"/>
    <property type="nucleotide sequence ID" value="NM_000657.3"/>
</dbReference>
<dbReference type="RefSeq" id="XP_047293689.1">
    <molecule id="P10415-1"/>
    <property type="nucleotide sequence ID" value="XM_047437733.1"/>
</dbReference>
<dbReference type="PDB" id="1G5M">
    <property type="method" value="NMR"/>
    <property type="chains" value="A=1-34, A=92-207"/>
</dbReference>
<dbReference type="PDB" id="1GJH">
    <property type="method" value="NMR"/>
    <property type="chains" value="A=1-34, A=92-207"/>
</dbReference>
<dbReference type="PDB" id="1YSW">
    <property type="method" value="NMR"/>
    <property type="chains" value="A=3-33, A=92-206"/>
</dbReference>
<dbReference type="PDB" id="2O21">
    <property type="method" value="NMR"/>
    <property type="chains" value="A=3-34, A=92-207"/>
</dbReference>
<dbReference type="PDB" id="2O22">
    <property type="method" value="NMR"/>
    <property type="chains" value="A=3-34, A=92-207"/>
</dbReference>
<dbReference type="PDB" id="2O2F">
    <property type="method" value="NMR"/>
    <property type="chains" value="A=8-31, A=92-204"/>
</dbReference>
<dbReference type="PDB" id="2W3L">
    <property type="method" value="X-ray"/>
    <property type="resolution" value="2.10 A"/>
    <property type="chains" value="A/B=92-206"/>
</dbReference>
<dbReference type="PDB" id="2XA0">
    <property type="method" value="X-ray"/>
    <property type="resolution" value="2.70 A"/>
    <property type="chains" value="A/B=1-207"/>
</dbReference>
<dbReference type="PDB" id="4AQ3">
    <property type="method" value="X-ray"/>
    <property type="resolution" value="2.40 A"/>
    <property type="chains" value="A/B/C/D/E/F=1-33, A/B/C/D/E/F=92-207"/>
</dbReference>
<dbReference type="PDB" id="4IEH">
    <property type="method" value="X-ray"/>
    <property type="resolution" value="2.10 A"/>
    <property type="chains" value="A=1-34, A=92-207"/>
</dbReference>
<dbReference type="PDB" id="4LVT">
    <property type="method" value="X-ray"/>
    <property type="resolution" value="2.05 A"/>
    <property type="chains" value="A/B=1-34, A/B=92-207"/>
</dbReference>
<dbReference type="PDB" id="4LXD">
    <property type="method" value="X-ray"/>
    <property type="resolution" value="1.90 A"/>
    <property type="chains" value="A=1-34, A=92-207"/>
</dbReference>
<dbReference type="PDB" id="4MAN">
    <property type="method" value="X-ray"/>
    <property type="resolution" value="2.07 A"/>
    <property type="chains" value="A/B=1-34, A/B=92-207"/>
</dbReference>
<dbReference type="PDB" id="5AGW">
    <property type="method" value="X-ray"/>
    <property type="resolution" value="2.69 A"/>
    <property type="chains" value="A/B=1-34, A/B=92-207"/>
</dbReference>
<dbReference type="PDB" id="5AGX">
    <property type="method" value="X-ray"/>
    <property type="resolution" value="2.24 A"/>
    <property type="chains" value="A/B=1-34, A/B=92-207"/>
</dbReference>
<dbReference type="PDB" id="5FCG">
    <property type="method" value="X-ray"/>
    <property type="resolution" value="2.10 A"/>
    <property type="chains" value="A=1-207"/>
</dbReference>
<dbReference type="PDB" id="5JSN">
    <property type="method" value="X-ray"/>
    <property type="resolution" value="2.10 A"/>
    <property type="chains" value="A/C=1-207"/>
</dbReference>
<dbReference type="PDB" id="5VAU">
    <property type="method" value="X-ray"/>
    <property type="resolution" value="1.75 A"/>
    <property type="chains" value="A/B/C/D=1-207"/>
</dbReference>
<dbReference type="PDB" id="5VAX">
    <property type="method" value="X-ray"/>
    <property type="resolution" value="2.00 A"/>
    <property type="chains" value="A/B/C/D=1-207"/>
</dbReference>
<dbReference type="PDB" id="5VAY">
    <property type="method" value="X-ray"/>
    <property type="resolution" value="1.80 A"/>
    <property type="chains" value="A/B/C/D=1-34, A/B/C/D=66-207"/>
</dbReference>
<dbReference type="PDB" id="6GL8">
    <property type="method" value="X-ray"/>
    <property type="resolution" value="1.40 A"/>
    <property type="chains" value="A=9-206"/>
</dbReference>
<dbReference type="PDB" id="6IWB">
    <property type="method" value="X-ray"/>
    <property type="resolution" value="2.50 A"/>
    <property type="chains" value="B/D=1-34, B/D=92-207"/>
</dbReference>
<dbReference type="PDB" id="6O0K">
    <property type="method" value="X-ray"/>
    <property type="resolution" value="1.62 A"/>
    <property type="chains" value="A=1-34, A=66-207"/>
</dbReference>
<dbReference type="PDB" id="6O0L">
    <property type="method" value="X-ray"/>
    <property type="resolution" value="2.20 A"/>
    <property type="chains" value="A/C=1-34, A/C=66-207"/>
</dbReference>
<dbReference type="PDB" id="6O0M">
    <property type="method" value="X-ray"/>
    <property type="resolution" value="1.75 A"/>
    <property type="chains" value="A=1-34, A=66-207"/>
</dbReference>
<dbReference type="PDB" id="6O0O">
    <property type="method" value="X-ray"/>
    <property type="resolution" value="2.00 A"/>
    <property type="chains" value="A/C=1-34, A/C=66-207"/>
</dbReference>
<dbReference type="PDB" id="6O0P">
    <property type="method" value="X-ray"/>
    <property type="resolution" value="1.80 A"/>
    <property type="chains" value="A=1-34, A=66-207"/>
</dbReference>
<dbReference type="PDB" id="7LHB">
    <property type="method" value="X-ray"/>
    <property type="resolution" value="2.07 A"/>
    <property type="chains" value="A/B/C=1-207"/>
</dbReference>
<dbReference type="PDB" id="7Y90">
    <property type="method" value="X-ray"/>
    <property type="resolution" value="2.09 A"/>
    <property type="chains" value="A=1-34, A=92-207"/>
</dbReference>
<dbReference type="PDB" id="7YA5">
    <property type="method" value="X-ray"/>
    <property type="resolution" value="1.85 A"/>
    <property type="chains" value="A=1-34, A=92-207"/>
</dbReference>
<dbReference type="PDB" id="8FY1">
    <property type="method" value="X-ray"/>
    <property type="resolution" value="2.56 A"/>
    <property type="chains" value="D=1-207"/>
</dbReference>
<dbReference type="PDB" id="8FY2">
    <property type="method" value="X-ray"/>
    <property type="resolution" value="2.98 A"/>
    <property type="chains" value="D=1-207"/>
</dbReference>
<dbReference type="PDB" id="8HLL">
    <property type="method" value="X-ray"/>
    <property type="resolution" value="2.62 A"/>
    <property type="chains" value="B=10-35, B=92-203"/>
</dbReference>
<dbReference type="PDB" id="8HLM">
    <property type="method" value="X-ray"/>
    <property type="resolution" value="2.52 A"/>
    <property type="chains" value="B=10-35, B=92-203"/>
</dbReference>
<dbReference type="PDB" id="8HLN">
    <property type="method" value="X-ray"/>
    <property type="resolution" value="2.35 A"/>
    <property type="chains" value="B=10-35, B=92-203"/>
</dbReference>
<dbReference type="PDB" id="8HOG">
    <property type="method" value="X-ray"/>
    <property type="resolution" value="1.80 A"/>
    <property type="chains" value="A=5-207"/>
</dbReference>
<dbReference type="PDB" id="8HOH">
    <property type="method" value="X-ray"/>
    <property type="resolution" value="1.90 A"/>
    <property type="chains" value="A=5-207"/>
</dbReference>
<dbReference type="PDB" id="8HOI">
    <property type="method" value="X-ray"/>
    <property type="resolution" value="2.25 A"/>
    <property type="chains" value="A/B/C/D=5-207"/>
</dbReference>
<dbReference type="PDB" id="8HTR">
    <property type="method" value="X-ray"/>
    <property type="resolution" value="1.60 A"/>
    <property type="chains" value="A=1-207"/>
</dbReference>
<dbReference type="PDB" id="8HTS">
    <property type="method" value="X-ray"/>
    <property type="resolution" value="1.25 A"/>
    <property type="chains" value="A=1-207"/>
</dbReference>
<dbReference type="PDB" id="8IQL">
    <property type="method" value="X-ray"/>
    <property type="resolution" value="2.96 A"/>
    <property type="chains" value="A/C=1-34, A/C=66-207"/>
</dbReference>
<dbReference type="PDB" id="8U27">
    <property type="method" value="NMR"/>
    <property type="chains" value="A=1-34, A=66-218"/>
</dbReference>
<dbReference type="PDB" id="8VWX">
    <property type="method" value="X-ray"/>
    <property type="resolution" value="1.77 A"/>
    <property type="chains" value="A=10-34, A=66-207"/>
</dbReference>
<dbReference type="PDB" id="8VWZ">
    <property type="method" value="X-ray"/>
    <property type="resolution" value="2.33 A"/>
    <property type="chains" value="A=10-34, A=66-207"/>
</dbReference>
<dbReference type="PDB" id="8VXM">
    <property type="method" value="X-ray"/>
    <property type="resolution" value="2.10 A"/>
    <property type="chains" value="A=10-34, A=66-207"/>
</dbReference>
<dbReference type="PDB" id="8VXN">
    <property type="method" value="X-ray"/>
    <property type="resolution" value="2.09 A"/>
    <property type="chains" value="A=10-34, A=66-207"/>
</dbReference>
<dbReference type="PDBsum" id="1G5M"/>
<dbReference type="PDBsum" id="1GJH"/>
<dbReference type="PDBsum" id="1YSW"/>
<dbReference type="PDBsum" id="2O21"/>
<dbReference type="PDBsum" id="2O22"/>
<dbReference type="PDBsum" id="2O2F"/>
<dbReference type="PDBsum" id="2W3L"/>
<dbReference type="PDBsum" id="2XA0"/>
<dbReference type="PDBsum" id="4AQ3"/>
<dbReference type="PDBsum" id="4IEH"/>
<dbReference type="PDBsum" id="4LVT"/>
<dbReference type="PDBsum" id="4LXD"/>
<dbReference type="PDBsum" id="4MAN"/>
<dbReference type="PDBsum" id="5AGW"/>
<dbReference type="PDBsum" id="5AGX"/>
<dbReference type="PDBsum" id="5FCG"/>
<dbReference type="PDBsum" id="5JSN"/>
<dbReference type="PDBsum" id="5VAU"/>
<dbReference type="PDBsum" id="5VAX"/>
<dbReference type="PDBsum" id="5VAY"/>
<dbReference type="PDBsum" id="6GL8"/>
<dbReference type="PDBsum" id="6IWB"/>
<dbReference type="PDBsum" id="6O0K"/>
<dbReference type="PDBsum" id="6O0L"/>
<dbReference type="PDBsum" id="6O0M"/>
<dbReference type="PDBsum" id="6O0O"/>
<dbReference type="PDBsum" id="6O0P"/>
<dbReference type="PDBsum" id="7LHB"/>
<dbReference type="PDBsum" id="7Y90"/>
<dbReference type="PDBsum" id="7YA5"/>
<dbReference type="PDBsum" id="8FY1"/>
<dbReference type="PDBsum" id="8FY2"/>
<dbReference type="PDBsum" id="8HLL"/>
<dbReference type="PDBsum" id="8HLM"/>
<dbReference type="PDBsum" id="8HLN"/>
<dbReference type="PDBsum" id="8HOG"/>
<dbReference type="PDBsum" id="8HOH"/>
<dbReference type="PDBsum" id="8HOI"/>
<dbReference type="PDBsum" id="8HTR"/>
<dbReference type="PDBsum" id="8HTS"/>
<dbReference type="PDBsum" id="8IQL"/>
<dbReference type="PDBsum" id="8U27"/>
<dbReference type="PDBsum" id="8VWX"/>
<dbReference type="PDBsum" id="8VWZ"/>
<dbReference type="PDBsum" id="8VXM"/>
<dbReference type="PDBsum" id="8VXN"/>
<dbReference type="SMR" id="P10415"/>
<dbReference type="BioGRID" id="107068">
    <property type="interactions" value="143"/>
</dbReference>
<dbReference type="ComplexPortal" id="CPX-1981">
    <property type="entry name" value="BCL-2 dimer"/>
</dbReference>
<dbReference type="ComplexPortal" id="CPX-1982">
    <property type="entry name" value="BAD:BCL-2 complex"/>
</dbReference>
<dbReference type="ComplexPortal" id="CPX-1984">
    <property type="entry name" value="BID:BCL-2 complex"/>
</dbReference>
<dbReference type="ComplexPortal" id="CPX-1986">
    <property type="entry name" value="PUMA:BCL-2 complex"/>
</dbReference>
<dbReference type="ComplexPortal" id="CPX-1990">
    <property type="entry name" value="BIM:BCL-2 complex"/>
</dbReference>
<dbReference type="CORUM" id="P10415"/>
<dbReference type="DIP" id="DIP-1043N"/>
<dbReference type="ELM" id="P10415"/>
<dbReference type="FunCoup" id="P10415">
    <property type="interactions" value="1598"/>
</dbReference>
<dbReference type="IntAct" id="P10415">
    <property type="interactions" value="75"/>
</dbReference>
<dbReference type="MINT" id="P10415"/>
<dbReference type="STRING" id="9606.ENSP00000381185"/>
<dbReference type="BindingDB" id="P10415"/>
<dbReference type="ChEMBL" id="CHEMBL4860"/>
<dbReference type="DrugBank" id="DB17023">
    <property type="generic name" value="ABT-737"/>
</dbReference>
<dbReference type="DrugBank" id="DB05103">
    <property type="generic name" value="AN-9"/>
</dbReference>
<dbReference type="DrugBank" id="DB06307">
    <property type="generic name" value="Apoptone"/>
</dbReference>
<dbReference type="DrugBank" id="DB09213">
    <property type="generic name" value="Dexibuprofen"/>
</dbReference>
<dbReference type="DrugBank" id="DB01248">
    <property type="generic name" value="Docetaxel"/>
</dbReference>
<dbReference type="DrugBank" id="DB12243">
    <property type="generic name" value="Edaravone"/>
</dbReference>
<dbReference type="DrugBank" id="DB08871">
    <property type="generic name" value="Eribulin"/>
</dbReference>
<dbReference type="DrugBank" id="DB13044">
    <property type="generic name" value="Gossypol"/>
</dbReference>
<dbReference type="DrugBank" id="DB01050">
    <property type="generic name" value="Ibuprofen"/>
</dbReference>
<dbReference type="DrugBank" id="DB18054">
    <property type="generic name" value="Lisaftoclax"/>
</dbReference>
<dbReference type="DrugBank" id="DB12340">
    <property type="generic name" value="Navitoclax"/>
</dbReference>
<dbReference type="DrugBank" id="DB12191">
    <property type="generic name" value="Obatoclax"/>
</dbReference>
<dbReference type="DrugBank" id="DB13811">
    <property type="generic name" value="Oblimersen"/>
</dbReference>
<dbReference type="DrugBank" id="DB12843">
    <property type="generic name" value="Oleandrin"/>
</dbReference>
<dbReference type="DrugBank" id="DB01229">
    <property type="generic name" value="Paclitaxel"/>
</dbReference>
<dbReference type="DrugBank" id="DB05297">
    <property type="generic name" value="Paclitaxel docosahexaenoic acid"/>
</dbReference>
<dbReference type="DrugBank" id="DB01367">
    <property type="generic name" value="Rasagiline"/>
</dbReference>
<dbReference type="DrugBank" id="DB12816">
    <property type="generic name" value="Terpinen-4-ol"/>
</dbReference>
<dbReference type="DrugBank" id="DB16447">
    <property type="generic name" value="Thymoquinone"/>
</dbReference>
<dbReference type="DrugBank" id="DB17059">
    <property type="generic name" value="TW-37"/>
</dbReference>
<dbReference type="DrugBank" id="DB11581">
    <property type="generic name" value="Venetoclax"/>
</dbReference>
<dbReference type="DrugCentral" id="P10415"/>
<dbReference type="GuidetoPHARMACOLOGY" id="2844"/>
<dbReference type="TCDB" id="1.A.21.1.10">
    <property type="family name" value="the bcl-2 (bcl-2) family"/>
</dbReference>
<dbReference type="iPTMnet" id="P10415"/>
<dbReference type="PhosphoSitePlus" id="P10415"/>
<dbReference type="BioMuta" id="BCL2"/>
<dbReference type="DMDM" id="231632"/>
<dbReference type="jPOST" id="P10415"/>
<dbReference type="MassIVE" id="P10415"/>
<dbReference type="PaxDb" id="9606-ENSP00000381185"/>
<dbReference type="PeptideAtlas" id="P10415"/>
<dbReference type="ProteomicsDB" id="10203"/>
<dbReference type="ProteomicsDB" id="52603">
    <molecule id="P10415-1"/>
</dbReference>
<dbReference type="ProteomicsDB" id="52604">
    <molecule id="P10415-2"/>
</dbReference>
<dbReference type="Pumba" id="P10415"/>
<dbReference type="ABCD" id="P10415">
    <property type="antibodies" value="1 sequenced antibody"/>
</dbReference>
<dbReference type="Antibodypedia" id="3491">
    <property type="antibodies" value="3945 antibodies from 60 providers"/>
</dbReference>
<dbReference type="DNASU" id="596"/>
<dbReference type="Ensembl" id="ENST00000333681.5">
    <molecule id="P10415-1"/>
    <property type="protein sequence ID" value="ENSP00000329623.3"/>
    <property type="gene ID" value="ENSG00000171791.14"/>
</dbReference>
<dbReference type="Ensembl" id="ENST00000398117.1">
    <molecule id="P10415-1"/>
    <property type="protein sequence ID" value="ENSP00000381185.1"/>
    <property type="gene ID" value="ENSG00000171791.14"/>
</dbReference>
<dbReference type="Ensembl" id="ENST00000589955.2">
    <molecule id="P10415-2"/>
    <property type="protein sequence ID" value="ENSP00000466417.1"/>
    <property type="gene ID" value="ENSG00000171791.14"/>
</dbReference>
<dbReference type="Ensembl" id="ENST00000678349.1">
    <molecule id="P10415-2"/>
    <property type="protein sequence ID" value="ENSP00000504190.1"/>
    <property type="gene ID" value="ENSG00000171791.14"/>
</dbReference>
<dbReference type="GeneID" id="596"/>
<dbReference type="KEGG" id="hsa:596"/>
<dbReference type="MANE-Select" id="ENST00000333681.5">
    <property type="protein sequence ID" value="ENSP00000329623.3"/>
    <property type="RefSeq nucleotide sequence ID" value="NM_000633.3"/>
    <property type="RefSeq protein sequence ID" value="NP_000624.2"/>
</dbReference>
<dbReference type="UCSC" id="uc002lit.2">
    <molecule id="P10415-1"/>
    <property type="organism name" value="human"/>
</dbReference>
<dbReference type="AGR" id="HGNC:990"/>
<dbReference type="CTD" id="596"/>
<dbReference type="DisGeNET" id="596"/>
<dbReference type="GeneCards" id="BCL2"/>
<dbReference type="HGNC" id="HGNC:990">
    <property type="gene designation" value="BCL2"/>
</dbReference>
<dbReference type="HPA" id="ENSG00000171791">
    <property type="expression patterns" value="Low tissue specificity"/>
</dbReference>
<dbReference type="MalaCards" id="BCL2"/>
<dbReference type="MIM" id="151430">
    <property type="type" value="gene+phenotype"/>
</dbReference>
<dbReference type="neXtProt" id="NX_P10415"/>
<dbReference type="OpenTargets" id="ENSG00000171791"/>
<dbReference type="Orphanet" id="545">
    <property type="disease" value="Follicular lymphoma"/>
</dbReference>
<dbReference type="Orphanet" id="480541">
    <property type="disease" value="High grade B-cell lymphoma with MYC and/ or BCL2 and/or BCL6 rearrangement"/>
</dbReference>
<dbReference type="Orphanet" id="98839">
    <property type="disease" value="Intravascular large B-cell lymphoma"/>
</dbReference>
<dbReference type="PharmGKB" id="PA25302"/>
<dbReference type="VEuPathDB" id="HostDB:ENSG00000171791"/>
<dbReference type="eggNOG" id="KOG4728">
    <property type="taxonomic scope" value="Eukaryota"/>
</dbReference>
<dbReference type="GeneTree" id="ENSGT01130000278332"/>
<dbReference type="HOGENOM" id="CLU_085401_0_0_1"/>
<dbReference type="InParanoid" id="P10415"/>
<dbReference type="OMA" id="IAVWMTE"/>
<dbReference type="OrthoDB" id="6021377at2759"/>
<dbReference type="PAN-GO" id="P10415">
    <property type="GO annotations" value="6 GO annotations based on evolutionary models"/>
</dbReference>
<dbReference type="PhylomeDB" id="P10415"/>
<dbReference type="TreeFam" id="TF315834"/>
<dbReference type="PathwayCommons" id="P10415"/>
<dbReference type="Reactome" id="R-HSA-111447">
    <property type="pathway name" value="Activation of BAD and translocation to mitochondria"/>
</dbReference>
<dbReference type="Reactome" id="R-HSA-111453">
    <property type="pathway name" value="BH3-only proteins associate with and inactivate anti-apoptotic BCL-2 members"/>
</dbReference>
<dbReference type="Reactome" id="R-HSA-6785807">
    <property type="pathway name" value="Interleukin-4 and Interleukin-13 signaling"/>
</dbReference>
<dbReference type="Reactome" id="R-HSA-844455">
    <property type="pathway name" value="The NLRP1 inflammasome"/>
</dbReference>
<dbReference type="Reactome" id="R-HSA-9018519">
    <property type="pathway name" value="Estrogen-dependent gene expression"/>
</dbReference>
<dbReference type="Reactome" id="R-HSA-9634638">
    <property type="pathway name" value="Estrogen-dependent nuclear events downstream of ESR-membrane signaling"/>
</dbReference>
<dbReference type="Reactome" id="R-HSA-9818030">
    <property type="pathway name" value="NFE2L2 regulating tumorigenic genes"/>
</dbReference>
<dbReference type="Reactome" id="R-HSA-9824594">
    <property type="pathway name" value="Regulation of MITF-M-dependent genes involved in apoptosis"/>
</dbReference>
<dbReference type="SignaLink" id="P10415"/>
<dbReference type="SIGNOR" id="P10415"/>
<dbReference type="BioGRID-ORCS" id="596">
    <property type="hits" value="63 hits in 1162 CRISPR screens"/>
</dbReference>
<dbReference type="CD-CODE" id="B5B9A610">
    <property type="entry name" value="PML body"/>
</dbReference>
<dbReference type="ChiTaRS" id="BCL2">
    <property type="organism name" value="human"/>
</dbReference>
<dbReference type="EvolutionaryTrace" id="P10415"/>
<dbReference type="GeneWiki" id="Bcl-2"/>
<dbReference type="GenomeRNAi" id="596"/>
<dbReference type="Pharos" id="P10415">
    <property type="development level" value="Tclin"/>
</dbReference>
<dbReference type="PRO" id="PR:P10415"/>
<dbReference type="Proteomes" id="UP000005640">
    <property type="component" value="Chromosome 18"/>
</dbReference>
<dbReference type="RNAct" id="P10415">
    <property type="molecule type" value="protein"/>
</dbReference>
<dbReference type="Bgee" id="ENSG00000171791">
    <property type="expression patterns" value="Expressed in dorsal motor nucleus of vagus nerve and 206 other cell types or tissues"/>
</dbReference>
<dbReference type="ExpressionAtlas" id="P10415">
    <property type="expression patterns" value="baseline and differential"/>
</dbReference>
<dbReference type="GO" id="GO:0097138">
    <property type="term" value="C:BAD-BCL-2 complex"/>
    <property type="evidence" value="ECO:0000353"/>
    <property type="project" value="ComplexPortal"/>
</dbReference>
<dbReference type="GO" id="GO:0005737">
    <property type="term" value="C:cytoplasm"/>
    <property type="evidence" value="ECO:0000314"/>
    <property type="project" value="UniProtKB"/>
</dbReference>
<dbReference type="GO" id="GO:0005829">
    <property type="term" value="C:cytosol"/>
    <property type="evidence" value="ECO:0007669"/>
    <property type="project" value="Ensembl"/>
</dbReference>
<dbReference type="GO" id="GO:0005783">
    <property type="term" value="C:endoplasmic reticulum"/>
    <property type="evidence" value="ECO:0000314"/>
    <property type="project" value="UniProtKB"/>
</dbReference>
<dbReference type="GO" id="GO:0005789">
    <property type="term" value="C:endoplasmic reticulum membrane"/>
    <property type="evidence" value="ECO:0000314"/>
    <property type="project" value="UniProtKB"/>
</dbReference>
<dbReference type="GO" id="GO:0016020">
    <property type="term" value="C:membrane"/>
    <property type="evidence" value="ECO:0000314"/>
    <property type="project" value="MGI"/>
</dbReference>
<dbReference type="GO" id="GO:0005741">
    <property type="term" value="C:mitochondrial outer membrane"/>
    <property type="evidence" value="ECO:0000314"/>
    <property type="project" value="UniProtKB"/>
</dbReference>
<dbReference type="GO" id="GO:0005739">
    <property type="term" value="C:mitochondrion"/>
    <property type="evidence" value="ECO:0000314"/>
    <property type="project" value="UniProtKB"/>
</dbReference>
<dbReference type="GO" id="GO:0043209">
    <property type="term" value="C:myelin sheath"/>
    <property type="evidence" value="ECO:0007669"/>
    <property type="project" value="Ensembl"/>
</dbReference>
<dbReference type="GO" id="GO:0031965">
    <property type="term" value="C:nuclear membrane"/>
    <property type="evidence" value="ECO:0000314"/>
    <property type="project" value="UniProtKB"/>
</dbReference>
<dbReference type="GO" id="GO:0005634">
    <property type="term" value="C:nucleus"/>
    <property type="evidence" value="ECO:0000314"/>
    <property type="project" value="MGI"/>
</dbReference>
<dbReference type="GO" id="GO:0046930">
    <property type="term" value="C:pore complex"/>
    <property type="evidence" value="ECO:0000314"/>
    <property type="project" value="BHF-UCL"/>
</dbReference>
<dbReference type="GO" id="GO:0032991">
    <property type="term" value="C:protein-containing complex"/>
    <property type="evidence" value="ECO:0000315"/>
    <property type="project" value="CAFA"/>
</dbReference>
<dbReference type="GO" id="GO:0051434">
    <property type="term" value="F:BH3 domain binding"/>
    <property type="evidence" value="ECO:0000353"/>
    <property type="project" value="UniProtKB"/>
</dbReference>
<dbReference type="GO" id="GO:0015267">
    <property type="term" value="F:channel activity"/>
    <property type="evidence" value="ECO:0000314"/>
    <property type="project" value="BHF-UCL"/>
</dbReference>
<dbReference type="GO" id="GO:0016248">
    <property type="term" value="F:channel inhibitor activity"/>
    <property type="evidence" value="ECO:0000314"/>
    <property type="project" value="BHF-UCL"/>
</dbReference>
<dbReference type="GO" id="GO:0140297">
    <property type="term" value="F:DNA-binding transcription factor binding"/>
    <property type="evidence" value="ECO:0000353"/>
    <property type="project" value="ARUK-UCL"/>
</dbReference>
<dbReference type="GO" id="GO:0042802">
    <property type="term" value="F:identical protein binding"/>
    <property type="evidence" value="ECO:0000353"/>
    <property type="project" value="UniProtKB"/>
</dbReference>
<dbReference type="GO" id="GO:0060090">
    <property type="term" value="F:molecular adaptor activity"/>
    <property type="evidence" value="ECO:0000269"/>
    <property type="project" value="DisProt"/>
</dbReference>
<dbReference type="GO" id="GO:0002020">
    <property type="term" value="F:protease binding"/>
    <property type="evidence" value="ECO:0000314"/>
    <property type="project" value="UniProtKB"/>
</dbReference>
<dbReference type="GO" id="GO:0046982">
    <property type="term" value="F:protein heterodimerization activity"/>
    <property type="evidence" value="ECO:0000353"/>
    <property type="project" value="UniProtKB"/>
</dbReference>
<dbReference type="GO" id="GO:0051721">
    <property type="term" value="F:protein phosphatase 2A binding"/>
    <property type="evidence" value="ECO:0007669"/>
    <property type="project" value="Ensembl"/>
</dbReference>
<dbReference type="GO" id="GO:0043565">
    <property type="term" value="F:sequence-specific DNA binding"/>
    <property type="evidence" value="ECO:0000314"/>
    <property type="project" value="MGI"/>
</dbReference>
<dbReference type="GO" id="GO:0031625">
    <property type="term" value="F:ubiquitin protein ligase binding"/>
    <property type="evidence" value="ECO:0000353"/>
    <property type="project" value="UniProtKB"/>
</dbReference>
<dbReference type="GO" id="GO:0007015">
    <property type="term" value="P:actin filament organization"/>
    <property type="evidence" value="ECO:0007669"/>
    <property type="project" value="Ensembl"/>
</dbReference>
<dbReference type="GO" id="GO:0006915">
    <property type="term" value="P:apoptotic process"/>
    <property type="evidence" value="ECO:0000314"/>
    <property type="project" value="MGI"/>
</dbReference>
<dbReference type="GO" id="GO:0006914">
    <property type="term" value="P:autophagy"/>
    <property type="evidence" value="ECO:0007669"/>
    <property type="project" value="UniProtKB-KW"/>
</dbReference>
<dbReference type="GO" id="GO:0031103">
    <property type="term" value="P:axon regeneration"/>
    <property type="evidence" value="ECO:0007669"/>
    <property type="project" value="Ensembl"/>
</dbReference>
<dbReference type="GO" id="GO:0007409">
    <property type="term" value="P:axonogenesis"/>
    <property type="evidence" value="ECO:0007669"/>
    <property type="project" value="Ensembl"/>
</dbReference>
<dbReference type="GO" id="GO:0001783">
    <property type="term" value="P:B cell apoptotic process"/>
    <property type="evidence" value="ECO:0007669"/>
    <property type="project" value="Ensembl"/>
</dbReference>
<dbReference type="GO" id="GO:0001782">
    <property type="term" value="P:B cell homeostasis"/>
    <property type="evidence" value="ECO:0007669"/>
    <property type="project" value="Ensembl"/>
</dbReference>
<dbReference type="GO" id="GO:0002326">
    <property type="term" value="P:B cell lineage commitment"/>
    <property type="evidence" value="ECO:0007669"/>
    <property type="project" value="Ensembl"/>
</dbReference>
<dbReference type="GO" id="GO:0042100">
    <property type="term" value="P:B cell proliferation"/>
    <property type="evidence" value="ECO:0000314"/>
    <property type="project" value="MGI"/>
</dbReference>
<dbReference type="GO" id="GO:0050853">
    <property type="term" value="P:B cell receptor signaling pathway"/>
    <property type="evidence" value="ECO:0000315"/>
    <property type="project" value="UniProtKB"/>
</dbReference>
<dbReference type="GO" id="GO:0001662">
    <property type="term" value="P:behavioral fear response"/>
    <property type="evidence" value="ECO:0007669"/>
    <property type="project" value="Ensembl"/>
</dbReference>
<dbReference type="GO" id="GO:0001658">
    <property type="term" value="P:branching involved in ureteric bud morphogenesis"/>
    <property type="evidence" value="ECO:0007669"/>
    <property type="project" value="Ensembl"/>
</dbReference>
<dbReference type="GO" id="GO:0060402">
    <property type="term" value="P:calcium ion transport into cytosol"/>
    <property type="evidence" value="ECO:0007669"/>
    <property type="project" value="Ensembl"/>
</dbReference>
<dbReference type="GO" id="GO:0043375">
    <property type="term" value="P:CD8-positive, alpha-beta T cell lineage commitment"/>
    <property type="evidence" value="ECO:0007669"/>
    <property type="project" value="Ensembl"/>
</dbReference>
<dbReference type="GO" id="GO:0098609">
    <property type="term" value="P:cell-cell adhesion"/>
    <property type="evidence" value="ECO:0007669"/>
    <property type="project" value="Ensembl"/>
</dbReference>
<dbReference type="GO" id="GO:0042149">
    <property type="term" value="P:cellular response to glucose starvation"/>
    <property type="evidence" value="ECO:0007669"/>
    <property type="project" value="Ensembl"/>
</dbReference>
<dbReference type="GO" id="GO:0071456">
    <property type="term" value="P:cellular response to hypoxia"/>
    <property type="evidence" value="ECO:0007669"/>
    <property type="project" value="Ensembl"/>
</dbReference>
<dbReference type="GO" id="GO:0021747">
    <property type="term" value="P:cochlear nucleus development"/>
    <property type="evidence" value="ECO:0007669"/>
    <property type="project" value="Ensembl"/>
</dbReference>
<dbReference type="GO" id="GO:0051607">
    <property type="term" value="P:defense response to virus"/>
    <property type="evidence" value="ECO:0000314"/>
    <property type="project" value="UniProtKB"/>
</dbReference>
<dbReference type="GO" id="GO:0097048">
    <property type="term" value="P:dendritic cell apoptotic process"/>
    <property type="evidence" value="ECO:0007669"/>
    <property type="project" value="Ensembl"/>
</dbReference>
<dbReference type="GO" id="GO:0048546">
    <property type="term" value="P:digestive tract morphogenesis"/>
    <property type="evidence" value="ECO:0007669"/>
    <property type="project" value="Ensembl"/>
</dbReference>
<dbReference type="GO" id="GO:0006974">
    <property type="term" value="P:DNA damage response"/>
    <property type="evidence" value="ECO:0000315"/>
    <property type="project" value="UniProtKB"/>
</dbReference>
<dbReference type="GO" id="GO:0043583">
    <property type="term" value="P:ear development"/>
    <property type="evidence" value="ECO:0007669"/>
    <property type="project" value="Ensembl"/>
</dbReference>
<dbReference type="GO" id="GO:0032469">
    <property type="term" value="P:endoplasmic reticulum calcium ion homeostasis"/>
    <property type="evidence" value="ECO:0000304"/>
    <property type="project" value="UniProtKB"/>
</dbReference>
<dbReference type="GO" id="GO:1904019">
    <property type="term" value="P:epithelial cell apoptotic process"/>
    <property type="evidence" value="ECO:0007669"/>
    <property type="project" value="Ensembl"/>
</dbReference>
<dbReference type="GO" id="GO:0051649">
    <property type="term" value="P:establishment of localization in cell"/>
    <property type="evidence" value="ECO:0007669"/>
    <property type="project" value="Ensembl"/>
</dbReference>
<dbReference type="GO" id="GO:0097192">
    <property type="term" value="P:extrinsic apoptotic signaling pathway in absence of ligand"/>
    <property type="evidence" value="ECO:0000318"/>
    <property type="project" value="GO_Central"/>
</dbReference>
<dbReference type="GO" id="GO:0008625">
    <property type="term" value="P:extrinsic apoptotic signaling pathway via death domain receptors"/>
    <property type="evidence" value="ECO:0000314"/>
    <property type="project" value="MGI"/>
</dbReference>
<dbReference type="GO" id="GO:0007565">
    <property type="term" value="P:female pregnancy"/>
    <property type="evidence" value="ECO:0000303"/>
    <property type="project" value="UniProtKB"/>
</dbReference>
<dbReference type="GO" id="GO:0048041">
    <property type="term" value="P:focal adhesion assembly"/>
    <property type="evidence" value="ECO:0007669"/>
    <property type="project" value="Ensembl"/>
</dbReference>
<dbReference type="GO" id="GO:0000082">
    <property type="term" value="P:G1/S transition of mitotic cell cycle"/>
    <property type="evidence" value="ECO:0007669"/>
    <property type="project" value="Ensembl"/>
</dbReference>
<dbReference type="GO" id="GO:0022612">
    <property type="term" value="P:gland morphogenesis"/>
    <property type="evidence" value="ECO:0007669"/>
    <property type="project" value="Ensembl"/>
</dbReference>
<dbReference type="GO" id="GO:0032835">
    <property type="term" value="P:glomerulus development"/>
    <property type="evidence" value="ECO:0007669"/>
    <property type="project" value="Ensembl"/>
</dbReference>
<dbReference type="GO" id="GO:0031069">
    <property type="term" value="P:hair follicle morphogenesis"/>
    <property type="evidence" value="ECO:0007669"/>
    <property type="project" value="Ensembl"/>
</dbReference>
<dbReference type="GO" id="GO:0060218">
    <property type="term" value="P:hematopoietic stem cell differentiation"/>
    <property type="evidence" value="ECO:0007669"/>
    <property type="project" value="Ensembl"/>
</dbReference>
<dbReference type="GO" id="GO:0048873">
    <property type="term" value="P:homeostasis of number of cells within a tissue"/>
    <property type="evidence" value="ECO:0007669"/>
    <property type="project" value="Ensembl"/>
</dbReference>
<dbReference type="GO" id="GO:0006959">
    <property type="term" value="P:humoral immune response"/>
    <property type="evidence" value="ECO:0000304"/>
    <property type="project" value="UniProtKB"/>
</dbReference>
<dbReference type="GO" id="GO:0008630">
    <property type="term" value="P:intrinsic apoptotic signaling pathway in response to DNA damage"/>
    <property type="evidence" value="ECO:0000318"/>
    <property type="project" value="GO_Central"/>
</dbReference>
<dbReference type="GO" id="GO:0070059">
    <property type="term" value="P:intrinsic apoptotic signaling pathway in response to endoplasmic reticulum stress"/>
    <property type="evidence" value="ECO:0000314"/>
    <property type="project" value="MGI"/>
</dbReference>
<dbReference type="GO" id="GO:0008631">
    <property type="term" value="P:intrinsic apoptotic signaling pathway in response to oxidative stress"/>
    <property type="evidence" value="ECO:0007669"/>
    <property type="project" value="Ensembl"/>
</dbReference>
<dbReference type="GO" id="GO:0002320">
    <property type="term" value="P:lymphoid progenitor cell differentiation"/>
    <property type="evidence" value="ECO:0007669"/>
    <property type="project" value="Ensembl"/>
</dbReference>
<dbReference type="GO" id="GO:0008584">
    <property type="term" value="P:male gonad development"/>
    <property type="evidence" value="ECO:0007669"/>
    <property type="project" value="Ensembl"/>
</dbReference>
<dbReference type="GO" id="GO:0006582">
    <property type="term" value="P:melanin metabolic process"/>
    <property type="evidence" value="ECO:0007669"/>
    <property type="project" value="Ensembl"/>
</dbReference>
<dbReference type="GO" id="GO:0030318">
    <property type="term" value="P:melanocyte differentiation"/>
    <property type="evidence" value="ECO:0007669"/>
    <property type="project" value="Ensembl"/>
</dbReference>
<dbReference type="GO" id="GO:0014031">
    <property type="term" value="P:mesenchymal cell development"/>
    <property type="evidence" value="ECO:0007669"/>
    <property type="project" value="Ensembl"/>
</dbReference>
<dbReference type="GO" id="GO:0001656">
    <property type="term" value="P:metanephros development"/>
    <property type="evidence" value="ECO:0007669"/>
    <property type="project" value="Ensembl"/>
</dbReference>
<dbReference type="GO" id="GO:0097049">
    <property type="term" value="P:motor neuron apoptotic process"/>
    <property type="evidence" value="ECO:0007669"/>
    <property type="project" value="Ensembl"/>
</dbReference>
<dbReference type="GO" id="GO:0033028">
    <property type="term" value="P:myeloid cell apoptotic process"/>
    <property type="evidence" value="ECO:0007669"/>
    <property type="project" value="Ensembl"/>
</dbReference>
<dbReference type="GO" id="GO:2000811">
    <property type="term" value="P:negative regulation of anoikis"/>
    <property type="evidence" value="ECO:0000315"/>
    <property type="project" value="UniProtKB"/>
</dbReference>
<dbReference type="GO" id="GO:0043066">
    <property type="term" value="P:negative regulation of apoptotic process"/>
    <property type="evidence" value="ECO:0000314"/>
    <property type="project" value="UniProtKB"/>
</dbReference>
<dbReference type="GO" id="GO:2001234">
    <property type="term" value="P:negative regulation of apoptotic signaling pathway"/>
    <property type="evidence" value="ECO:0000315"/>
    <property type="project" value="UniProtKB"/>
</dbReference>
<dbReference type="GO" id="GO:0010507">
    <property type="term" value="P:negative regulation of autophagy"/>
    <property type="evidence" value="ECO:0000314"/>
    <property type="project" value="UniProtKB"/>
</dbReference>
<dbReference type="GO" id="GO:0002903">
    <property type="term" value="P:negative regulation of B cell apoptotic process"/>
    <property type="evidence" value="ECO:0007669"/>
    <property type="project" value="Ensembl"/>
</dbReference>
<dbReference type="GO" id="GO:0010523">
    <property type="term" value="P:negative regulation of calcium ion transport into cytosol"/>
    <property type="evidence" value="ECO:0007669"/>
    <property type="project" value="Ensembl"/>
</dbReference>
<dbReference type="GO" id="GO:0030308">
    <property type="term" value="P:negative regulation of cell growth"/>
    <property type="evidence" value="ECO:0007669"/>
    <property type="project" value="Ensembl"/>
</dbReference>
<dbReference type="GO" id="GO:0030336">
    <property type="term" value="P:negative regulation of cell migration"/>
    <property type="evidence" value="ECO:0007669"/>
    <property type="project" value="Ensembl"/>
</dbReference>
<dbReference type="GO" id="GO:0032848">
    <property type="term" value="P:negative regulation of cellular pH reduction"/>
    <property type="evidence" value="ECO:0000314"/>
    <property type="project" value="UniProtKB"/>
</dbReference>
<dbReference type="GO" id="GO:2000669">
    <property type="term" value="P:negative regulation of dendritic cell apoptotic process"/>
    <property type="evidence" value="ECO:0007669"/>
    <property type="project" value="Ensembl"/>
</dbReference>
<dbReference type="GO" id="GO:1904036">
    <property type="term" value="P:negative regulation of epithelial cell apoptotic process"/>
    <property type="evidence" value="ECO:0007669"/>
    <property type="project" value="Ensembl"/>
</dbReference>
<dbReference type="GO" id="GO:2001240">
    <property type="term" value="P:negative regulation of extrinsic apoptotic signaling pathway in absence of ligand"/>
    <property type="evidence" value="ECO:0000316"/>
    <property type="project" value="MGI"/>
</dbReference>
<dbReference type="GO" id="GO:2000134">
    <property type="term" value="P:negative regulation of G1/S transition of mitotic cell cycle"/>
    <property type="evidence" value="ECO:0007669"/>
    <property type="project" value="Ensembl"/>
</dbReference>
<dbReference type="GO" id="GO:2001243">
    <property type="term" value="P:negative regulation of intrinsic apoptotic signaling pathway"/>
    <property type="evidence" value="ECO:0000314"/>
    <property type="project" value="UniProtKB"/>
</dbReference>
<dbReference type="GO" id="GO:1902166">
    <property type="term" value="P:negative regulation of intrinsic apoptotic signaling pathway in response to DNA damage by p53 class mediator"/>
    <property type="evidence" value="ECO:0000304"/>
    <property type="project" value="BHF-UCL"/>
</dbReference>
<dbReference type="GO" id="GO:0051902">
    <property type="term" value="P:negative regulation of mitochondrial depolarization"/>
    <property type="evidence" value="ECO:0000304"/>
    <property type="project" value="UniProtKB"/>
</dbReference>
<dbReference type="GO" id="GO:2000672">
    <property type="term" value="P:negative regulation of motor neuron apoptotic process"/>
    <property type="evidence" value="ECO:0007669"/>
    <property type="project" value="Ensembl"/>
</dbReference>
<dbReference type="GO" id="GO:0033033">
    <property type="term" value="P:negative regulation of myeloid cell apoptotic process"/>
    <property type="evidence" value="ECO:0007669"/>
    <property type="project" value="Ensembl"/>
</dbReference>
<dbReference type="GO" id="GO:0043524">
    <property type="term" value="P:negative regulation of neuron apoptotic process"/>
    <property type="evidence" value="ECO:0000314"/>
    <property type="project" value="MGI"/>
</dbReference>
<dbReference type="GO" id="GO:0030279">
    <property type="term" value="P:negative regulation of ossification"/>
    <property type="evidence" value="ECO:0007669"/>
    <property type="project" value="Ensembl"/>
</dbReference>
<dbReference type="GO" id="GO:0033689">
    <property type="term" value="P:negative regulation of osteoblast proliferation"/>
    <property type="evidence" value="ECO:0007669"/>
    <property type="project" value="Ensembl"/>
</dbReference>
<dbReference type="GO" id="GO:0046671">
    <property type="term" value="P:negative regulation of retinal cell programmed cell death"/>
    <property type="evidence" value="ECO:0007669"/>
    <property type="project" value="Ensembl"/>
</dbReference>
<dbReference type="GO" id="GO:0070233">
    <property type="term" value="P:negative regulation of T cell apoptotic process"/>
    <property type="evidence" value="ECO:0007669"/>
    <property type="project" value="Ensembl"/>
</dbReference>
<dbReference type="GO" id="GO:0051402">
    <property type="term" value="P:neuron apoptotic process"/>
    <property type="evidence" value="ECO:0000304"/>
    <property type="project" value="HGNC-UCL"/>
</dbReference>
<dbReference type="GO" id="GO:0042551">
    <property type="term" value="P:neuron maturation"/>
    <property type="evidence" value="ECO:0007669"/>
    <property type="project" value="Ensembl"/>
</dbReference>
<dbReference type="GO" id="GO:0048599">
    <property type="term" value="P:oocyte development"/>
    <property type="evidence" value="ECO:0007669"/>
    <property type="project" value="Ensembl"/>
</dbReference>
<dbReference type="GO" id="GO:0035265">
    <property type="term" value="P:organ growth"/>
    <property type="evidence" value="ECO:0007669"/>
    <property type="project" value="Ensembl"/>
</dbReference>
<dbReference type="GO" id="GO:0001503">
    <property type="term" value="P:ossification"/>
    <property type="evidence" value="ECO:0007669"/>
    <property type="project" value="Ensembl"/>
</dbReference>
<dbReference type="GO" id="GO:0033687">
    <property type="term" value="P:osteoblast proliferation"/>
    <property type="evidence" value="ECO:0007669"/>
    <property type="project" value="Ensembl"/>
</dbReference>
<dbReference type="GO" id="GO:0001541">
    <property type="term" value="P:ovarian follicle development"/>
    <property type="evidence" value="ECO:0007669"/>
    <property type="project" value="Ensembl"/>
</dbReference>
<dbReference type="GO" id="GO:0048753">
    <property type="term" value="P:pigment granule organization"/>
    <property type="evidence" value="ECO:0007669"/>
    <property type="project" value="Ensembl"/>
</dbReference>
<dbReference type="GO" id="GO:0043065">
    <property type="term" value="P:positive regulation of apoptotic process"/>
    <property type="evidence" value="ECO:0000318"/>
    <property type="project" value="GO_Central"/>
</dbReference>
<dbReference type="GO" id="GO:0030890">
    <property type="term" value="P:positive regulation of B cell proliferation"/>
    <property type="evidence" value="ECO:0000315"/>
    <property type="project" value="UniProtKB"/>
</dbReference>
<dbReference type="GO" id="GO:0030307">
    <property type="term" value="P:positive regulation of cell growth"/>
    <property type="evidence" value="ECO:0000314"/>
    <property type="project" value="MGI"/>
</dbReference>
<dbReference type="GO" id="GO:0008284">
    <property type="term" value="P:positive regulation of cell population proliferation"/>
    <property type="evidence" value="ECO:0000316"/>
    <property type="project" value="ARUK-UCL"/>
</dbReference>
<dbReference type="GO" id="GO:0045636">
    <property type="term" value="P:positive regulation of melanocyte differentiation"/>
    <property type="evidence" value="ECO:0007669"/>
    <property type="project" value="Ensembl"/>
</dbReference>
<dbReference type="GO" id="GO:0040018">
    <property type="term" value="P:positive regulation of multicellular organism growth"/>
    <property type="evidence" value="ECO:0007669"/>
    <property type="project" value="Ensembl"/>
</dbReference>
<dbReference type="GO" id="GO:0014042">
    <property type="term" value="P:positive regulation of neuron maturation"/>
    <property type="evidence" value="ECO:0007669"/>
    <property type="project" value="Ensembl"/>
</dbReference>
<dbReference type="GO" id="GO:0048743">
    <property type="term" value="P:positive regulation of skeletal muscle fiber development"/>
    <property type="evidence" value="ECO:0007669"/>
    <property type="project" value="Ensembl"/>
</dbReference>
<dbReference type="GO" id="GO:0014911">
    <property type="term" value="P:positive regulation of smooth muscle cell migration"/>
    <property type="evidence" value="ECO:0007669"/>
    <property type="project" value="Ensembl"/>
</dbReference>
<dbReference type="GO" id="GO:0009791">
    <property type="term" value="P:post-embryonic development"/>
    <property type="evidence" value="ECO:0007669"/>
    <property type="project" value="Ensembl"/>
</dbReference>
<dbReference type="GO" id="GO:0000209">
    <property type="term" value="P:protein polyubiquitination"/>
    <property type="evidence" value="ECO:0000314"/>
    <property type="project" value="MGI"/>
</dbReference>
<dbReference type="GO" id="GO:0072593">
    <property type="term" value="P:reactive oxygen species metabolic process"/>
    <property type="evidence" value="ECO:0007669"/>
    <property type="project" value="Ensembl"/>
</dbReference>
<dbReference type="GO" id="GO:0051924">
    <property type="term" value="P:regulation of calcium ion transport"/>
    <property type="evidence" value="ECO:0000314"/>
    <property type="project" value="MGI"/>
</dbReference>
<dbReference type="GO" id="GO:0001952">
    <property type="term" value="P:regulation of cell-matrix adhesion"/>
    <property type="evidence" value="ECO:0007669"/>
    <property type="project" value="Ensembl"/>
</dbReference>
<dbReference type="GO" id="GO:0010468">
    <property type="term" value="P:regulation of gene expression"/>
    <property type="evidence" value="ECO:0007669"/>
    <property type="project" value="Ensembl"/>
</dbReference>
<dbReference type="GO" id="GO:0010559">
    <property type="term" value="P:regulation of glycoprotein biosynthetic process"/>
    <property type="evidence" value="ECO:0007669"/>
    <property type="project" value="Ensembl"/>
</dbReference>
<dbReference type="GO" id="GO:0046902">
    <property type="term" value="P:regulation of mitochondrial membrane permeability"/>
    <property type="evidence" value="ECO:0000250"/>
    <property type="project" value="HGNC-UCL"/>
</dbReference>
<dbReference type="GO" id="GO:0051881">
    <property type="term" value="P:regulation of mitochondrial membrane potential"/>
    <property type="evidence" value="ECO:0000250"/>
    <property type="project" value="HGNC-UCL"/>
</dbReference>
<dbReference type="GO" id="GO:0006808">
    <property type="term" value="P:regulation of nitrogen utilization"/>
    <property type="evidence" value="ECO:0007669"/>
    <property type="project" value="Ensembl"/>
</dbReference>
<dbReference type="GO" id="GO:0032880">
    <property type="term" value="P:regulation of protein localization"/>
    <property type="evidence" value="ECO:0007669"/>
    <property type="project" value="Ensembl"/>
</dbReference>
<dbReference type="GO" id="GO:0031647">
    <property type="term" value="P:regulation of protein stability"/>
    <property type="evidence" value="ECO:0007669"/>
    <property type="project" value="Ensembl"/>
</dbReference>
<dbReference type="GO" id="GO:0022898">
    <property type="term" value="P:regulation of transmembrane transporter activity"/>
    <property type="evidence" value="ECO:0000314"/>
    <property type="project" value="BHF-UCL"/>
</dbReference>
<dbReference type="GO" id="GO:0045069">
    <property type="term" value="P:regulation of viral genome replication"/>
    <property type="evidence" value="ECO:0007669"/>
    <property type="project" value="Ensembl"/>
</dbReference>
<dbReference type="GO" id="GO:0001836">
    <property type="term" value="P:release of cytochrome c from mitochondria"/>
    <property type="evidence" value="ECO:0000250"/>
    <property type="project" value="HGNC-UCL"/>
</dbReference>
<dbReference type="GO" id="GO:0003014">
    <property type="term" value="P:renal system process"/>
    <property type="evidence" value="ECO:0007669"/>
    <property type="project" value="Ensembl"/>
</dbReference>
<dbReference type="GO" id="GO:0034097">
    <property type="term" value="P:response to cytokine"/>
    <property type="evidence" value="ECO:0000314"/>
    <property type="project" value="MGI"/>
</dbReference>
<dbReference type="GO" id="GO:0010332">
    <property type="term" value="P:response to gamma radiation"/>
    <property type="evidence" value="ECO:0007669"/>
    <property type="project" value="Ensembl"/>
</dbReference>
<dbReference type="GO" id="GO:0051384">
    <property type="term" value="P:response to glucocorticoid"/>
    <property type="evidence" value="ECO:0007669"/>
    <property type="project" value="Ensembl"/>
</dbReference>
<dbReference type="GO" id="GO:0042542">
    <property type="term" value="P:response to hydrogen peroxide"/>
    <property type="evidence" value="ECO:0007669"/>
    <property type="project" value="Ensembl"/>
</dbReference>
<dbReference type="GO" id="GO:0010039">
    <property type="term" value="P:response to iron ion"/>
    <property type="evidence" value="ECO:0000314"/>
    <property type="project" value="UniProtKB"/>
</dbReference>
<dbReference type="GO" id="GO:0002931">
    <property type="term" value="P:response to ischemia"/>
    <property type="evidence" value="ECO:0007669"/>
    <property type="project" value="Ensembl"/>
</dbReference>
<dbReference type="GO" id="GO:0035094">
    <property type="term" value="P:response to nicotine"/>
    <property type="evidence" value="ECO:0000314"/>
    <property type="project" value="UniProtKB"/>
</dbReference>
<dbReference type="GO" id="GO:0009314">
    <property type="term" value="P:response to radiation"/>
    <property type="evidence" value="ECO:0000303"/>
    <property type="project" value="UniProtKB"/>
</dbReference>
<dbReference type="GO" id="GO:0009636">
    <property type="term" value="P:response to toxic substance"/>
    <property type="evidence" value="ECO:0000314"/>
    <property type="project" value="HGNC-UCL"/>
</dbReference>
<dbReference type="GO" id="GO:0010224">
    <property type="term" value="P:response to UV-B"/>
    <property type="evidence" value="ECO:0007669"/>
    <property type="project" value="Ensembl"/>
</dbReference>
<dbReference type="GO" id="GO:0009410">
    <property type="term" value="P:response to xenobiotic stimulus"/>
    <property type="evidence" value="ECO:0000314"/>
    <property type="project" value="MGI"/>
</dbReference>
<dbReference type="GO" id="GO:0046666">
    <property type="term" value="P:retinal cell programmed cell death"/>
    <property type="evidence" value="ECO:0007669"/>
    <property type="project" value="Ensembl"/>
</dbReference>
<dbReference type="GO" id="GO:0048741">
    <property type="term" value="P:skeletal muscle fiber development"/>
    <property type="evidence" value="ECO:0007669"/>
    <property type="project" value="Ensembl"/>
</dbReference>
<dbReference type="GO" id="GO:0014909">
    <property type="term" value="P:smooth muscle cell migration"/>
    <property type="evidence" value="ECO:0007669"/>
    <property type="project" value="Ensembl"/>
</dbReference>
<dbReference type="GO" id="GO:0048536">
    <property type="term" value="P:spleen development"/>
    <property type="evidence" value="ECO:0007669"/>
    <property type="project" value="Ensembl"/>
</dbReference>
<dbReference type="GO" id="GO:0048864">
    <property type="term" value="P:stem cell development"/>
    <property type="evidence" value="ECO:0007669"/>
    <property type="project" value="Ensembl"/>
</dbReference>
<dbReference type="GO" id="GO:0070231">
    <property type="term" value="P:T cell apoptotic process"/>
    <property type="evidence" value="ECO:0007669"/>
    <property type="project" value="Ensembl"/>
</dbReference>
<dbReference type="GO" id="GO:0033077">
    <property type="term" value="P:T cell differentiation in thymus"/>
    <property type="evidence" value="ECO:0007669"/>
    <property type="project" value="Ensembl"/>
</dbReference>
<dbReference type="GO" id="GO:0043029">
    <property type="term" value="P:T cell homeostasis"/>
    <property type="evidence" value="ECO:0007669"/>
    <property type="project" value="Ensembl"/>
</dbReference>
<dbReference type="GO" id="GO:0048538">
    <property type="term" value="P:thymus development"/>
    <property type="evidence" value="ECO:0007669"/>
    <property type="project" value="Ensembl"/>
</dbReference>
<dbReference type="CDD" id="cd06845">
    <property type="entry name" value="Bcl-2_like"/>
    <property type="match status" value="1"/>
</dbReference>
<dbReference type="DisProt" id="DP00297"/>
<dbReference type="FunFam" id="1.10.437.10:FF:000006">
    <property type="entry name" value="Apoptosis regulator Bcl-2"/>
    <property type="match status" value="1"/>
</dbReference>
<dbReference type="Gene3D" id="1.10.437.10">
    <property type="entry name" value="Blc2-like"/>
    <property type="match status" value="1"/>
</dbReference>
<dbReference type="IDEAL" id="IID00707"/>
<dbReference type="InterPro" id="IPR013278">
    <property type="entry name" value="Apop_reg_Bcl2"/>
</dbReference>
<dbReference type="InterPro" id="IPR036834">
    <property type="entry name" value="Bcl-2-like_sf"/>
</dbReference>
<dbReference type="InterPro" id="IPR046371">
    <property type="entry name" value="Bcl-2_BH1-3"/>
</dbReference>
<dbReference type="InterPro" id="IPR026298">
    <property type="entry name" value="Bcl-2_fam"/>
</dbReference>
<dbReference type="InterPro" id="IPR002475">
    <property type="entry name" value="Bcl2-like"/>
</dbReference>
<dbReference type="InterPro" id="IPR004725">
    <property type="entry name" value="Bcl2/BclX"/>
</dbReference>
<dbReference type="InterPro" id="IPR020717">
    <property type="entry name" value="Bcl2_BH1_motif_CS"/>
</dbReference>
<dbReference type="InterPro" id="IPR020726">
    <property type="entry name" value="Bcl2_BH2_motif_CS"/>
</dbReference>
<dbReference type="InterPro" id="IPR020728">
    <property type="entry name" value="Bcl2_BH3_motif_CS"/>
</dbReference>
<dbReference type="InterPro" id="IPR003093">
    <property type="entry name" value="Bcl2_BH4"/>
</dbReference>
<dbReference type="InterPro" id="IPR020731">
    <property type="entry name" value="Bcl2_BH4_motif_CS"/>
</dbReference>
<dbReference type="NCBIfam" id="TIGR00865">
    <property type="entry name" value="bcl-2"/>
    <property type="match status" value="1"/>
</dbReference>
<dbReference type="PANTHER" id="PTHR11256:SF11">
    <property type="entry name" value="APOPTOSIS REGULATOR BCL-2"/>
    <property type="match status" value="1"/>
</dbReference>
<dbReference type="PANTHER" id="PTHR11256">
    <property type="entry name" value="BCL-2 RELATED"/>
    <property type="match status" value="1"/>
</dbReference>
<dbReference type="Pfam" id="PF00452">
    <property type="entry name" value="Bcl-2"/>
    <property type="match status" value="1"/>
</dbReference>
<dbReference type="Pfam" id="PF02180">
    <property type="entry name" value="BH4"/>
    <property type="match status" value="1"/>
</dbReference>
<dbReference type="PRINTS" id="PR01863">
    <property type="entry name" value="APOPREGBCL2"/>
</dbReference>
<dbReference type="PRINTS" id="PR01862">
    <property type="entry name" value="BCL2FAMILY"/>
</dbReference>
<dbReference type="SMART" id="SM00337">
    <property type="entry name" value="BCL"/>
    <property type="match status" value="1"/>
</dbReference>
<dbReference type="SMART" id="SM00265">
    <property type="entry name" value="BH4"/>
    <property type="match status" value="1"/>
</dbReference>
<dbReference type="SUPFAM" id="SSF56854">
    <property type="entry name" value="Bcl-2 inhibitors of programmed cell death"/>
    <property type="match status" value="1"/>
</dbReference>
<dbReference type="PROSITE" id="PS50062">
    <property type="entry name" value="BCL2_FAMILY"/>
    <property type="match status" value="1"/>
</dbReference>
<dbReference type="PROSITE" id="PS01080">
    <property type="entry name" value="BH1"/>
    <property type="match status" value="1"/>
</dbReference>
<dbReference type="PROSITE" id="PS01258">
    <property type="entry name" value="BH2"/>
    <property type="match status" value="1"/>
</dbReference>
<dbReference type="PROSITE" id="PS01259">
    <property type="entry name" value="BH3"/>
    <property type="match status" value="1"/>
</dbReference>
<dbReference type="PROSITE" id="PS01260">
    <property type="entry name" value="BH4_1"/>
    <property type="match status" value="1"/>
</dbReference>
<dbReference type="PROSITE" id="PS50063">
    <property type="entry name" value="BH4_2"/>
    <property type="match status" value="1"/>
</dbReference>
<protein>
    <recommendedName>
        <fullName>Apoptosis regulator Bcl-2</fullName>
    </recommendedName>
</protein>
<proteinExistence type="evidence at protein level"/>
<gene>
    <name type="primary">BCL2</name>
</gene>
<comment type="function">
    <text evidence="9 14 15 19 20 32 37">Suppresses apoptosis in a variety of cell systems including factor-dependent lymphohematopoietic and neural cells (PubMed:1508712, PubMed:8183370). Regulates cell death by controlling the mitochondrial membrane permeability (PubMed:11368354). Appears to function in a feedback loop system with caspases (PubMed:11368354). Inhibits caspase activity either by preventing the release of cytochrome c from the mitochondria and/or by binding to the apoptosis-activating factor (APAF-1) (PubMed:11368354). Also acts as an inhibitor of autophagy: interacts with BECN1 and AMBRA1 during non-starvation conditions and inhibits their autophagy function (PubMed:18570871, PubMed:20889974, PubMed:21358617). May attenuate inflammation by impairing NLRP1-inflammasome activation, hence CASP1 activation and IL1B release (PubMed:17418785).</text>
</comment>
<comment type="subunit">
    <text evidence="1 6 7 10 11 12 13 14 15 16 17 18 20 22 23 24 25 28 29 32 33 34">Forms homodimers, and heterodimers with BAX, BAD, BAK and Bcl-X(L). Heterodimerization with BAX requires intact BH1 and BH2 motifs, and is necessary for anti-apoptotic activity (PubMed:25609812, PubMed:8183370). Part of a complex composed of SEPTIN4 isoform ARTS, XIAP and BCL2, within the complex interacts (via BH3 domain) with SEPTIN4 isoform ARTS and XIAP, SEPTIN4 isoform ARTS acts as a scaffold protein and stabilizes the complex (PubMed:29020630). Component of the complex, at least composed of LRPPRC, BECN1 and BCL2; the interactions prevent BECN1 from forming an autophagy-inducing complex with PIK3C3 (PubMed:23822101). Interacts with EI24 (By similarity). Also interacts with APAF1, BBC3, BCL2L1, BNIPL, MRPL41 and TP53BP2. Binding to FKBP8 seems to target BCL2 to the mitochondria and probably interferes with the binding of BCL2 to its targets. Interacts with BAG1 in an ATP-dependent manner. Interacts with RAF1 (the 'Ser-338' and 'Ser-339' phosphorylated form). Interacts (via the BH4 domain) with EGLN3; the interaction prevents the formation of the BAX-BCL2 complex and inhibits the anti-apoptotic activity of BCL2. Interacts with G0S2; this interaction also prevents the formation of the anti-apoptotic BAX-BCL2 complex. Interacts with RTL10/BOP. Interacts with the SCF(FBXO10) complex. Interacts (via the loop between motifs BH4 and BH3) with NLRP1 (via LRR repeats), but not with NLRP2, NLRP3, NLRP4, PYCARD, nor MEFV (PubMed:17418785). Interacts with GIMAP3/IAN4, GIMAP4/IAN1 and GIMAP5/IAN5 (By similarity). Interacts with BCAP31 (PubMed:31206022). Interacts with IRF3; the interaction is inhibited by Sendai virus infection (PubMed:25609812). Interacts with BECN1; thereby inhibiting autophagy in non-starvation conditions (PubMed:18570871, PubMed:21358617). Interacts with AMBRA1; thereby inhibiting autophagy (PubMed:21358617).</text>
</comment>
<comment type="subunit">
    <text evidence="31">(Microbial infection) Interacts with Toxoplasma gondii ROP17; the interaction probably promotes BCL2 phosphorylation and degradation.</text>
</comment>
<comment type="interaction">
    <interactant intactId="EBI-77694">
        <id>P10415</id>
    </interactant>
    <interactant intactId="EBI-2512975">
        <id>Q9C0C7</id>
        <label>AMBRA1</label>
    </interactant>
    <organismsDiffer>false</organismsDiffer>
    <experiments>10</experiments>
</comment>
<comment type="interaction">
    <interactant intactId="EBI-77694">
        <id>P10415</id>
    </interactant>
    <interactant intactId="EBI-77613">
        <id>P05067</id>
        <label>APP</label>
    </interactant>
    <organismsDiffer>false</organismsDiffer>
    <experiments>3</experiments>
</comment>
<comment type="interaction">
    <interactant intactId="EBI-77694">
        <id>P10415</id>
    </interactant>
    <interactant intactId="EBI-700771">
        <id>Q92934</id>
        <label>BAD</label>
    </interactant>
    <organismsDiffer>false</organismsDiffer>
    <experiments>7</experiments>
</comment>
<comment type="interaction">
    <interactant intactId="EBI-77694">
        <id>P10415</id>
    </interactant>
    <interactant intactId="EBI-519866">
        <id>Q16611</id>
        <label>BAK1</label>
    </interactant>
    <organismsDiffer>false</organismsDiffer>
    <experiments>3</experiments>
</comment>
<comment type="interaction">
    <interactant intactId="EBI-77694">
        <id>P10415</id>
    </interactant>
    <interactant intactId="EBI-516580">
        <id>Q07812</id>
        <label>BAX</label>
    </interactant>
    <organismsDiffer>false</organismsDiffer>
    <experiments>16</experiments>
</comment>
<comment type="interaction">
    <interactant intactId="EBI-77694">
        <id>P10415</id>
    </interactant>
    <interactant intactId="EBI-519884">
        <id>Q9BXH1</id>
        <label>BBC3</label>
    </interactant>
    <organismsDiffer>false</organismsDiffer>
    <experiments>6</experiments>
</comment>
<comment type="interaction">
    <interactant intactId="EBI-77694">
        <id>P10415</id>
    </interactant>
    <interactant intactId="EBI-77683">
        <id>P51572</id>
        <label>BCAP31</label>
    </interactant>
    <organismsDiffer>false</organismsDiffer>
    <experiments>2</experiments>
</comment>
<comment type="interaction">
    <interactant intactId="EBI-77694">
        <id>P10415</id>
    </interactant>
    <interactant intactId="EBI-77694">
        <id>P10415</id>
        <label>BCL2</label>
    </interactant>
    <organismsDiffer>false</organismsDiffer>
    <experiments>3</experiments>
</comment>
<comment type="interaction">
    <interactant intactId="EBI-77694">
        <id>P10415</id>
    </interactant>
    <interactant intactId="EBI-526406">
        <id>O43521</id>
        <label>BCL2L11</label>
    </interactant>
    <organismsDiffer>false</organismsDiffer>
    <experiments>11</experiments>
</comment>
<comment type="interaction">
    <interactant intactId="EBI-77694">
        <id>P10415</id>
    </interactant>
    <interactant intactId="EBI-526416">
        <id>O43521-1</id>
        <label>BCL2L11</label>
    </interactant>
    <organismsDiffer>false</organismsDiffer>
    <experiments>3</experiments>
</comment>
<comment type="interaction">
    <interactant intactId="EBI-77694">
        <id>P10415</id>
    </interactant>
    <interactant intactId="EBI-526420">
        <id>O43521-2</id>
        <label>BCL2L11</label>
    </interactant>
    <organismsDiffer>false</organismsDiffer>
    <experiments>4</experiments>
</comment>
<comment type="interaction">
    <interactant intactId="EBI-77694">
        <id>P10415</id>
    </interactant>
    <interactant intactId="EBI-437804">
        <id>Q9NYF8</id>
        <label>BCLAF1</label>
    </interactant>
    <organismsDiffer>false</organismsDiffer>
    <experiments>2</experiments>
</comment>
<comment type="interaction">
    <interactant intactId="EBI-77694">
        <id>P10415</id>
    </interactant>
    <interactant intactId="EBI-949378">
        <id>Q14457</id>
        <label>BECN1</label>
    </interactant>
    <organismsDiffer>false</organismsDiffer>
    <experiments>18</experiments>
</comment>
<comment type="interaction">
    <interactant intactId="EBI-77694">
        <id>P10415</id>
    </interactant>
    <interactant intactId="EBI-519672">
        <id>P55957</id>
        <label>BID</label>
    </interactant>
    <organismsDiffer>false</organismsDiffer>
    <experiments>9</experiments>
</comment>
<comment type="interaction">
    <interactant intactId="EBI-77694">
        <id>P10415</id>
    </interactant>
    <interactant intactId="EBI-700794">
        <id>Q13323</id>
        <label>BIK</label>
    </interactant>
    <organismsDiffer>false</organismsDiffer>
    <experiments>7</experiments>
</comment>
<comment type="interaction">
    <interactant intactId="EBI-77694">
        <id>P10415</id>
    </interactant>
    <interactant intactId="EBI-849893">
        <id>O60238</id>
        <label>BNIP3L</label>
    </interactant>
    <organismsDiffer>false</organismsDiffer>
    <experiments>2</experiments>
</comment>
<comment type="interaction">
    <interactant intactId="EBI-77694">
        <id>P10415</id>
    </interactant>
    <interactant intactId="EBI-1045797">
        <id>Q8N5K1</id>
        <label>CISD2</label>
    </interactant>
    <organismsDiffer>false</organismsDiffer>
    <experiments>2</experiments>
</comment>
<comment type="interaction">
    <interactant intactId="EBI-77694">
        <id>P10415</id>
    </interactant>
    <interactant intactId="EBI-398437">
        <id>O15151</id>
        <label>MDM4</label>
    </interactant>
    <organismsDiffer>false</organismsDiffer>
    <experiments>4</experiments>
</comment>
<comment type="interaction">
    <interactant intactId="EBI-77694">
        <id>P10415</id>
    </interactant>
    <interactant intactId="EBI-1220518">
        <id>Q9C000</id>
        <label>NLRP1</label>
    </interactant>
    <organismsDiffer>false</organismsDiffer>
    <experiments>13</experiments>
</comment>
<comment type="interaction">
    <interactant intactId="EBI-77694">
        <id>P10415</id>
    </interactant>
    <interactant intactId="EBI-721550">
        <id>P22736</id>
        <label>NR4A1</label>
    </interactant>
    <organismsDiffer>false</organismsDiffer>
    <experiments>7</experiments>
</comment>
<comment type="interaction">
    <interactant intactId="EBI-77694">
        <id>P10415</id>
    </interactant>
    <interactant intactId="EBI-707392">
        <id>Q13794</id>
        <label>PMAIP1</label>
    </interactant>
    <organismsDiffer>false</organismsDiffer>
    <experiments>3</experiments>
</comment>
<comment type="interaction">
    <interactant intactId="EBI-77694">
        <id>P10415</id>
    </interactant>
    <interactant intactId="EBI-520756">
        <id>O15304</id>
        <label>SIVA1</label>
    </interactant>
    <organismsDiffer>false</organismsDiffer>
    <experiments>2</experiments>
</comment>
<comment type="interaction">
    <interactant intactId="EBI-77694">
        <id>P10415</id>
    </interactant>
    <interactant intactId="EBI-990792">
        <id>P00441</id>
        <label>SOD1</label>
    </interactant>
    <organismsDiffer>false</organismsDiffer>
    <experiments>3</experiments>
</comment>
<comment type="interaction">
    <interactant intactId="EBI-77694">
        <id>P10415</id>
    </interactant>
    <interactant intactId="EBI-366083">
        <id>P04637</id>
        <label>TP53</label>
    </interactant>
    <organismsDiffer>false</organismsDiffer>
    <experiments>5</experiments>
</comment>
<comment type="interaction">
    <interactant intactId="EBI-77694">
        <id>P10415</id>
    </interactant>
    <interactant intactId="EBI-77642">
        <id>Q13625</id>
        <label>TP53BP2</label>
    </interactant>
    <organismsDiffer>false</organismsDiffer>
    <experiments>10</experiments>
</comment>
<comment type="interaction">
    <interactant intactId="EBI-77694">
        <id>P10415</id>
    </interactant>
    <interactant intactId="EBI-400328">
        <id>Q61337</id>
        <label>Bad</label>
    </interactant>
    <organismsDiffer>true</organismsDiffer>
    <experiments>6</experiments>
</comment>
<comment type="interaction">
    <interactant intactId="EBI-77694">
        <id>P10415</id>
    </interactant>
    <interactant intactId="EBI-708032">
        <id>Q91ZE9</id>
        <label>Bmf</label>
    </interactant>
    <organismsDiffer>true</organismsDiffer>
    <experiments>2</experiments>
</comment>
<comment type="interaction">
    <interactant intactId="EBI-77694">
        <id>P10415</id>
    </interactant>
    <interactant intactId="EBI-541478">
        <id>P11881</id>
        <label>Itpr1</label>
    </interactant>
    <organismsDiffer>true</organismsDiffer>
    <experiments>3</experiments>
</comment>
<comment type="interaction">
    <interactant intactId="EBI-4370304">
        <id>P10415-1</id>
    </interactant>
    <interactant intactId="EBI-5323863">
        <id>Q5S007</id>
        <label>LRRK2</label>
    </interactant>
    <organismsDiffer>false</organismsDiffer>
    <experiments>2</experiments>
</comment>
<comment type="interaction">
    <interactant intactId="EBI-4370304">
        <id>P10415-1</id>
    </interactant>
    <interactant intactId="EBI-707392">
        <id>Q13794</id>
        <label>PMAIP1</label>
    </interactant>
    <organismsDiffer>false</organismsDiffer>
    <experiments>3</experiments>
</comment>
<comment type="subcellular location">
    <subcellularLocation>
        <location evidence="20 21">Mitochondrion outer membrane</location>
        <topology evidence="2">Single-pass membrane protein</topology>
    </subcellularLocation>
    <subcellularLocation>
        <location evidence="21">Nucleus membrane</location>
        <topology evidence="2">Single-pass membrane protein</topology>
    </subcellularLocation>
    <subcellularLocation>
        <location evidence="20 21">Endoplasmic reticulum membrane</location>
        <topology evidence="2">Single-pass membrane protein</topology>
    </subcellularLocation>
    <subcellularLocation>
        <location evidence="1">Cytoplasm</location>
    </subcellularLocation>
</comment>
<comment type="alternative products">
    <event type="alternative splicing"/>
    <isoform>
        <id>P10415-1</id>
        <name>Alpha</name>
        <sequence type="displayed"/>
    </isoform>
    <isoform>
        <id>P10415-2</id>
        <name>Beta</name>
        <sequence type="described" ref="VSP_000512"/>
    </isoform>
</comment>
<comment type="tissue specificity">
    <text>Expressed in a variety of tissues.</text>
</comment>
<comment type="domain">
    <text evidence="32">BH1 and BH2 domains are required for the interaction with BAX and for anti-apoptotic activity.</text>
</comment>
<comment type="domain">
    <text>The BH4 motif is required for anti-apoptotic activity and for interaction with RAF1 and EGLN3.</text>
</comment>
<comment type="domain">
    <text evidence="14">The loop between motifs BH4 and BH3 is required for the interaction with NLRP1.</text>
</comment>
<comment type="domain">
    <text evidence="28">The BH3 domain is required for interaction with SEPTIN4 isoform ARTS and thereby for XIAP-mediated ubiquitination and subsequent induction of apoptosis.</text>
</comment>
<comment type="PTM">
    <text evidence="1 5 15 37">Phosphorylation/dephosphorylation on Ser-70 regulates anti-apoptotic activity (PubMed:11368354). Growth factor-stimulated phosphorylation on Ser-70 by PKC is required for the anti-apoptosis activity and occurs during the G2/M phase of the cell cycle (PubMed:11368354). In the absence of growth factors, BCL2 appears to be phosphorylated by other protein kinases such as ERKs and stress-activated kinases (PubMed:11368354). Phosphorylated by MAPK8/JNK1 at Thr-69, Ser-70 and Ser-87, which stimulates starvation-induced autophagy (PubMed:10567572, PubMed:18570871). Dephosphorylated by protein phosphatase 2A (PP2A) (By similarity).</text>
</comment>
<comment type="PTM">
    <text evidence="35">Proteolytically cleaved by caspases during apoptosis. The cleaved protein, lacking the BH4 motif, has pro-apoptotic activity, causes the release of cytochrome c into the cytosol promoting further caspase activity.</text>
</comment>
<comment type="PTM">
    <text evidence="19 23 28">Monoubiquitinated by PRKN, leading to an increase in its stability (PubMed:20889974). Ubiquitinated by SCF(FBXO10), leading to its degradation by the proteasome (PubMed:23431138). Ubiquitinated by XIAP, leading to its degradation by the proteasome (PubMed:29020630).</text>
</comment>
<comment type="disease">
    <text evidence="27 30">A chromosomal aberration involving BCL2 has been found in chronic lymphatic leukemia. Translocation t(14;18)(q32;q21) with immunoglobulin gene regions. BCL2 mutations found in non-Hodgkin lymphomas carrying the chromosomal translocation could be attributed to the Ig somatic hypermutation mechanism resulting in nucleotide transitions.</text>
</comment>
<comment type="similarity">
    <text evidence="39">Belongs to the Bcl-2 family.</text>
</comment>
<comment type="online information" name="Atlas of Genetics and Cytogenetics in Oncology and Haematology">
    <link uri="https://atlasgeneticsoncology.org/gene/49/BCL2"/>
</comment>
<comment type="online information" name="Wikipedia">
    <link uri="https://en.wikipedia.org/wiki/Bcl-2"/>
    <text>Bcl-2 entry</text>
</comment>
<sequence length="239" mass="26266">MAHAGRTGYDNREIVMKYIHYKLSQRGYEWDAGDVGAAPPGAAPAPGIFSSQPGHTPHPAASRDPVARTSPLQTPAAPGAAAGPALSPVPPVVHLTLRQAGDDFSRRYRRDFAEMSSQLHLTPFTARGRFATVVEELFRDGVNWGRIVAFFEFGGVMCVESVNREMSPLVDNIALWMTEYLNRHLHTWIQDNGGWDAFVELYGPSMRPLFDFSWLSLKTLLSLALVGACITLGAYLGHK</sequence>
<organism>
    <name type="scientific">Homo sapiens</name>
    <name type="common">Human</name>
    <dbReference type="NCBI Taxonomy" id="9606"/>
    <lineage>
        <taxon>Eukaryota</taxon>
        <taxon>Metazoa</taxon>
        <taxon>Chordata</taxon>
        <taxon>Craniata</taxon>
        <taxon>Vertebrata</taxon>
        <taxon>Euteleostomi</taxon>
        <taxon>Mammalia</taxon>
        <taxon>Eutheria</taxon>
        <taxon>Euarchontoglires</taxon>
        <taxon>Primates</taxon>
        <taxon>Haplorrhini</taxon>
        <taxon>Catarrhini</taxon>
        <taxon>Hominidae</taxon>
        <taxon>Homo</taxon>
    </lineage>
</organism>
<keyword id="KW-0002">3D-structure</keyword>
<keyword id="KW-0025">Alternative splicing</keyword>
<keyword id="KW-0053">Apoptosis</keyword>
<keyword id="KW-0072">Autophagy</keyword>
<keyword id="KW-0160">Chromosomal rearrangement</keyword>
<keyword id="KW-0963">Cytoplasm</keyword>
<keyword id="KW-0225">Disease variant</keyword>
<keyword id="KW-0256">Endoplasmic reticulum</keyword>
<keyword id="KW-0472">Membrane</keyword>
<keyword id="KW-0496">Mitochondrion</keyword>
<keyword id="KW-1000">Mitochondrion outer membrane</keyword>
<keyword id="KW-0539">Nucleus</keyword>
<keyword id="KW-0597">Phosphoprotein</keyword>
<keyword id="KW-1267">Proteomics identification</keyword>
<keyword id="KW-0656">Proto-oncogene</keyword>
<keyword id="KW-1185">Reference proteome</keyword>
<keyword id="KW-0812">Transmembrane</keyword>
<keyword id="KW-1133">Transmembrane helix</keyword>
<keyword id="KW-0832">Ubl conjugation</keyword>
<accession>P10415</accession>
<accession>C9JHD5</accession>
<accession>P10416</accession>
<accession>Q13842</accession>
<accession>Q16197</accession>